<proteinExistence type="evidence at protein level"/>
<evidence type="ECO:0000250" key="1">
    <source>
        <dbReference type="UniProtKB" id="Q3ULA2"/>
    </source>
</evidence>
<evidence type="ECO:0000255" key="2">
    <source>
        <dbReference type="PROSITE-ProRule" id="PRU00080"/>
    </source>
</evidence>
<evidence type="ECO:0000269" key="3">
    <source>
    </source>
</evidence>
<evidence type="ECO:0000269" key="4">
    <source>
    </source>
</evidence>
<evidence type="ECO:0000269" key="5">
    <source>
    </source>
</evidence>
<evidence type="ECO:0000269" key="6">
    <source>
    </source>
</evidence>
<evidence type="ECO:0000269" key="7">
    <source>
    </source>
</evidence>
<evidence type="ECO:0000269" key="8">
    <source>
    </source>
</evidence>
<evidence type="ECO:0000269" key="9">
    <source>
    </source>
</evidence>
<evidence type="ECO:0000269" key="10">
    <source>
    </source>
</evidence>
<evidence type="ECO:0000269" key="11">
    <source>
    </source>
</evidence>
<evidence type="ECO:0000269" key="12">
    <source>
    </source>
</evidence>
<evidence type="ECO:0000269" key="13">
    <source>
    </source>
</evidence>
<evidence type="ECO:0000269" key="14">
    <source>
    </source>
</evidence>
<evidence type="ECO:0000269" key="15">
    <source>
    </source>
</evidence>
<evidence type="ECO:0000269" key="16">
    <source>
    </source>
</evidence>
<evidence type="ECO:0000269" key="17">
    <source>
    </source>
</evidence>
<evidence type="ECO:0000269" key="18">
    <source>
    </source>
</evidence>
<evidence type="ECO:0000269" key="19">
    <source>
    </source>
</evidence>
<evidence type="ECO:0000269" key="20">
    <source>
    </source>
</evidence>
<evidence type="ECO:0000269" key="21">
    <source>
    </source>
</evidence>
<evidence type="ECO:0000269" key="22">
    <source>
    </source>
</evidence>
<evidence type="ECO:0000269" key="23">
    <source>
    </source>
</evidence>
<evidence type="ECO:0000269" key="24">
    <source>
    </source>
</evidence>
<evidence type="ECO:0000269" key="25">
    <source>
    </source>
</evidence>
<evidence type="ECO:0000269" key="26">
    <source>
    </source>
</evidence>
<evidence type="ECO:0000269" key="27">
    <source>
    </source>
</evidence>
<evidence type="ECO:0000269" key="28">
    <source>
    </source>
</evidence>
<evidence type="ECO:0000269" key="29">
    <source>
    </source>
</evidence>
<evidence type="ECO:0000269" key="30">
    <source>
    </source>
</evidence>
<evidence type="ECO:0000269" key="31">
    <source>
    </source>
</evidence>
<evidence type="ECO:0000269" key="32">
    <source>
    </source>
</evidence>
<evidence type="ECO:0000269" key="33">
    <source>
    </source>
</evidence>
<evidence type="ECO:0000269" key="34">
    <source>
    </source>
</evidence>
<evidence type="ECO:0000269" key="35">
    <source>
    </source>
</evidence>
<evidence type="ECO:0000269" key="36">
    <source>
    </source>
</evidence>
<evidence type="ECO:0000269" key="37">
    <source>
    </source>
</evidence>
<evidence type="ECO:0000269" key="38">
    <source>
    </source>
</evidence>
<evidence type="ECO:0000269" key="39">
    <source>
    </source>
</evidence>
<evidence type="ECO:0000269" key="40">
    <source>
    </source>
</evidence>
<evidence type="ECO:0000269" key="41">
    <source>
    </source>
</evidence>
<evidence type="ECO:0000269" key="42">
    <source>
    </source>
</evidence>
<evidence type="ECO:0000269" key="43">
    <source>
    </source>
</evidence>
<evidence type="ECO:0000269" key="44">
    <source>
    </source>
</evidence>
<evidence type="ECO:0000269" key="45">
    <source>
    </source>
</evidence>
<evidence type="ECO:0000269" key="46">
    <source>
    </source>
</evidence>
<evidence type="ECO:0000303" key="47">
    <source>
    </source>
</evidence>
<evidence type="ECO:0000303" key="48">
    <source>
    </source>
</evidence>
<evidence type="ECO:0000303" key="49">
    <source>
    </source>
</evidence>
<evidence type="ECO:0007829" key="50">
    <source>
        <dbReference type="PDB" id="2P64"/>
    </source>
</evidence>
<evidence type="ECO:0007829" key="51">
    <source>
        <dbReference type="PDB" id="6M90"/>
    </source>
</evidence>
<reference key="1">
    <citation type="journal article" date="1998" name="Nature">
        <title>Identification of the receptor component of the IkappaBalpha-ubiquitin ligase.</title>
        <authorList>
            <person name="Yaron A."/>
            <person name="Hatzubai A."/>
            <person name="Davis M."/>
            <person name="Lavon I."/>
            <person name="Amit S."/>
            <person name="Manning A.M."/>
            <person name="Andersen J.S."/>
            <person name="Mann M."/>
            <person name="Mercurio F."/>
            <person name="Ben-Neriah Y."/>
        </authorList>
    </citation>
    <scope>NUCLEOTIDE SEQUENCE [MRNA] (ISOFORM 1)</scope>
    <scope>FUNCTION</scope>
    <scope>PATHWAY</scope>
</reference>
<reference key="2">
    <citation type="journal article" date="1998" name="Mol. Cell">
        <title>A novel human WD protein, h-beta TrCp, that interacts with HIV-1 Vpu connects CD4 to the ER degradation pathway through an F-box motif.</title>
        <authorList>
            <person name="Margottin F."/>
            <person name="Bour S.P."/>
            <person name="Durand H."/>
            <person name="Selig L."/>
            <person name="Benichou S."/>
            <person name="Richard V."/>
            <person name="Thomas D."/>
            <person name="Strebel K."/>
            <person name="Benarous R."/>
        </authorList>
    </citation>
    <scope>NUCLEOTIDE SEQUENCE [MRNA] (ISOFORM 2)</scope>
    <scope>INTERACTION WITH HIV-1 VPU</scope>
    <source>
        <tissue>Lymphoid tissue</tissue>
    </source>
</reference>
<reference key="3">
    <citation type="journal article" date="1999" name="Curr. Biol.">
        <title>Identification of a family of human F-box proteins.</title>
        <authorList>
            <person name="Cenciarelli C."/>
            <person name="Chiaur D.S."/>
            <person name="Guardavaccaro D."/>
            <person name="Parks W."/>
            <person name="Vidal M."/>
            <person name="Pagano M."/>
        </authorList>
    </citation>
    <scope>NUCLEOTIDE SEQUENCE [MRNA] (ISOFORM 2)</scope>
</reference>
<reference key="4">
    <citation type="journal article" date="2010" name="Mol. Cell. Proteomics">
        <title>Systematic mapping and functional analysis of a family of human epididymal secretory sperm-located proteins.</title>
        <authorList>
            <person name="Li J."/>
            <person name="Liu F."/>
            <person name="Wang H."/>
            <person name="Liu X."/>
            <person name="Liu J."/>
            <person name="Li N."/>
            <person name="Wan F."/>
            <person name="Wang W."/>
            <person name="Zhang C."/>
            <person name="Jin S."/>
            <person name="Liu J."/>
            <person name="Zhu P."/>
            <person name="Liu Y."/>
        </authorList>
    </citation>
    <scope>NUCLEOTIDE SEQUENCE [MRNA] (ISOFORM 1)</scope>
    <scope>TISSUE SPECIFICITY</scope>
    <source>
        <tissue>Epididymis</tissue>
    </source>
</reference>
<reference key="5">
    <citation type="journal article" date="2004" name="Nat. Genet.">
        <title>Complete sequencing and characterization of 21,243 full-length human cDNAs.</title>
        <authorList>
            <person name="Ota T."/>
            <person name="Suzuki Y."/>
            <person name="Nishikawa T."/>
            <person name="Otsuki T."/>
            <person name="Sugiyama T."/>
            <person name="Irie R."/>
            <person name="Wakamatsu A."/>
            <person name="Hayashi K."/>
            <person name="Sato H."/>
            <person name="Nagai K."/>
            <person name="Kimura K."/>
            <person name="Makita H."/>
            <person name="Sekine M."/>
            <person name="Obayashi M."/>
            <person name="Nishi T."/>
            <person name="Shibahara T."/>
            <person name="Tanaka T."/>
            <person name="Ishii S."/>
            <person name="Yamamoto J."/>
            <person name="Saito K."/>
            <person name="Kawai Y."/>
            <person name="Isono Y."/>
            <person name="Nakamura Y."/>
            <person name="Nagahari K."/>
            <person name="Murakami K."/>
            <person name="Yasuda T."/>
            <person name="Iwayanagi T."/>
            <person name="Wagatsuma M."/>
            <person name="Shiratori A."/>
            <person name="Sudo H."/>
            <person name="Hosoiri T."/>
            <person name="Kaku Y."/>
            <person name="Kodaira H."/>
            <person name="Kondo H."/>
            <person name="Sugawara M."/>
            <person name="Takahashi M."/>
            <person name="Kanda K."/>
            <person name="Yokoi T."/>
            <person name="Furuya T."/>
            <person name="Kikkawa E."/>
            <person name="Omura Y."/>
            <person name="Abe K."/>
            <person name="Kamihara K."/>
            <person name="Katsuta N."/>
            <person name="Sato K."/>
            <person name="Tanikawa M."/>
            <person name="Yamazaki M."/>
            <person name="Ninomiya K."/>
            <person name="Ishibashi T."/>
            <person name="Yamashita H."/>
            <person name="Murakawa K."/>
            <person name="Fujimori K."/>
            <person name="Tanai H."/>
            <person name="Kimata M."/>
            <person name="Watanabe M."/>
            <person name="Hiraoka S."/>
            <person name="Chiba Y."/>
            <person name="Ishida S."/>
            <person name="Ono Y."/>
            <person name="Takiguchi S."/>
            <person name="Watanabe S."/>
            <person name="Yosida M."/>
            <person name="Hotuta T."/>
            <person name="Kusano J."/>
            <person name="Kanehori K."/>
            <person name="Takahashi-Fujii A."/>
            <person name="Hara H."/>
            <person name="Tanase T.-O."/>
            <person name="Nomura Y."/>
            <person name="Togiya S."/>
            <person name="Komai F."/>
            <person name="Hara R."/>
            <person name="Takeuchi K."/>
            <person name="Arita M."/>
            <person name="Imose N."/>
            <person name="Musashino K."/>
            <person name="Yuuki H."/>
            <person name="Oshima A."/>
            <person name="Sasaki N."/>
            <person name="Aotsuka S."/>
            <person name="Yoshikawa Y."/>
            <person name="Matsunawa H."/>
            <person name="Ichihara T."/>
            <person name="Shiohata N."/>
            <person name="Sano S."/>
            <person name="Moriya S."/>
            <person name="Momiyama H."/>
            <person name="Satoh N."/>
            <person name="Takami S."/>
            <person name="Terashima Y."/>
            <person name="Suzuki O."/>
            <person name="Nakagawa S."/>
            <person name="Senoh A."/>
            <person name="Mizoguchi H."/>
            <person name="Goto Y."/>
            <person name="Shimizu F."/>
            <person name="Wakebe H."/>
            <person name="Hishigaki H."/>
            <person name="Watanabe T."/>
            <person name="Sugiyama A."/>
            <person name="Takemoto M."/>
            <person name="Kawakami B."/>
            <person name="Yamazaki M."/>
            <person name="Watanabe K."/>
            <person name="Kumagai A."/>
            <person name="Itakura S."/>
            <person name="Fukuzumi Y."/>
            <person name="Fujimori Y."/>
            <person name="Komiyama M."/>
            <person name="Tashiro H."/>
            <person name="Tanigami A."/>
            <person name="Fujiwara T."/>
            <person name="Ono T."/>
            <person name="Yamada K."/>
            <person name="Fujii Y."/>
            <person name="Ozaki K."/>
            <person name="Hirao M."/>
            <person name="Ohmori Y."/>
            <person name="Kawabata A."/>
            <person name="Hikiji T."/>
            <person name="Kobatake N."/>
            <person name="Inagaki H."/>
            <person name="Ikema Y."/>
            <person name="Okamoto S."/>
            <person name="Okitani R."/>
            <person name="Kawakami T."/>
            <person name="Noguchi S."/>
            <person name="Itoh T."/>
            <person name="Shigeta K."/>
            <person name="Senba T."/>
            <person name="Matsumura K."/>
            <person name="Nakajima Y."/>
            <person name="Mizuno T."/>
            <person name="Morinaga M."/>
            <person name="Sasaki M."/>
            <person name="Togashi T."/>
            <person name="Oyama M."/>
            <person name="Hata H."/>
            <person name="Watanabe M."/>
            <person name="Komatsu T."/>
            <person name="Mizushima-Sugano J."/>
            <person name="Satoh T."/>
            <person name="Shirai Y."/>
            <person name="Takahashi Y."/>
            <person name="Nakagawa K."/>
            <person name="Okumura K."/>
            <person name="Nagase T."/>
            <person name="Nomura N."/>
            <person name="Kikuchi H."/>
            <person name="Masuho Y."/>
            <person name="Yamashita R."/>
            <person name="Nakai K."/>
            <person name="Yada T."/>
            <person name="Nakamura Y."/>
            <person name="Ohara O."/>
            <person name="Isogai T."/>
            <person name="Sugano S."/>
        </authorList>
    </citation>
    <scope>NUCLEOTIDE SEQUENCE [LARGE SCALE MRNA] (ISOFORM 1)</scope>
    <source>
        <tissue>Testis</tissue>
    </source>
</reference>
<reference key="6">
    <citation type="journal article" date="2004" name="Nature">
        <title>The DNA sequence and comparative analysis of human chromosome 10.</title>
        <authorList>
            <person name="Deloukas P."/>
            <person name="Earthrowl M.E."/>
            <person name="Grafham D.V."/>
            <person name="Rubenfield M."/>
            <person name="French L."/>
            <person name="Steward C.A."/>
            <person name="Sims S.K."/>
            <person name="Jones M.C."/>
            <person name="Searle S."/>
            <person name="Scott C."/>
            <person name="Howe K."/>
            <person name="Hunt S.E."/>
            <person name="Andrews T.D."/>
            <person name="Gilbert J.G.R."/>
            <person name="Swarbreck D."/>
            <person name="Ashurst J.L."/>
            <person name="Taylor A."/>
            <person name="Battles J."/>
            <person name="Bird C.P."/>
            <person name="Ainscough R."/>
            <person name="Almeida J.P."/>
            <person name="Ashwell R.I.S."/>
            <person name="Ambrose K.D."/>
            <person name="Babbage A.K."/>
            <person name="Bagguley C.L."/>
            <person name="Bailey J."/>
            <person name="Banerjee R."/>
            <person name="Bates K."/>
            <person name="Beasley H."/>
            <person name="Bray-Allen S."/>
            <person name="Brown A.J."/>
            <person name="Brown J.Y."/>
            <person name="Burford D.C."/>
            <person name="Burrill W."/>
            <person name="Burton J."/>
            <person name="Cahill P."/>
            <person name="Camire D."/>
            <person name="Carter N.P."/>
            <person name="Chapman J.C."/>
            <person name="Clark S.Y."/>
            <person name="Clarke G."/>
            <person name="Clee C.M."/>
            <person name="Clegg S."/>
            <person name="Corby N."/>
            <person name="Coulson A."/>
            <person name="Dhami P."/>
            <person name="Dutta I."/>
            <person name="Dunn M."/>
            <person name="Faulkner L."/>
            <person name="Frankish A."/>
            <person name="Frankland J.A."/>
            <person name="Garner P."/>
            <person name="Garnett J."/>
            <person name="Gribble S."/>
            <person name="Griffiths C."/>
            <person name="Grocock R."/>
            <person name="Gustafson E."/>
            <person name="Hammond S."/>
            <person name="Harley J.L."/>
            <person name="Hart E."/>
            <person name="Heath P.D."/>
            <person name="Ho T.P."/>
            <person name="Hopkins B."/>
            <person name="Horne J."/>
            <person name="Howden P.J."/>
            <person name="Huckle E."/>
            <person name="Hynds C."/>
            <person name="Johnson C."/>
            <person name="Johnson D."/>
            <person name="Kana A."/>
            <person name="Kay M."/>
            <person name="Kimberley A.M."/>
            <person name="Kershaw J.K."/>
            <person name="Kokkinaki M."/>
            <person name="Laird G.K."/>
            <person name="Lawlor S."/>
            <person name="Lee H.M."/>
            <person name="Leongamornlert D.A."/>
            <person name="Laird G."/>
            <person name="Lloyd C."/>
            <person name="Lloyd D.M."/>
            <person name="Loveland J."/>
            <person name="Lovell J."/>
            <person name="McLaren S."/>
            <person name="McLay K.E."/>
            <person name="McMurray A."/>
            <person name="Mashreghi-Mohammadi M."/>
            <person name="Matthews L."/>
            <person name="Milne S."/>
            <person name="Nickerson T."/>
            <person name="Nguyen M."/>
            <person name="Overton-Larty E."/>
            <person name="Palmer S.A."/>
            <person name="Pearce A.V."/>
            <person name="Peck A.I."/>
            <person name="Pelan S."/>
            <person name="Phillimore B."/>
            <person name="Porter K."/>
            <person name="Rice C.M."/>
            <person name="Rogosin A."/>
            <person name="Ross M.T."/>
            <person name="Sarafidou T."/>
            <person name="Sehra H.K."/>
            <person name="Shownkeen R."/>
            <person name="Skuce C.D."/>
            <person name="Smith M."/>
            <person name="Standring L."/>
            <person name="Sycamore N."/>
            <person name="Tester J."/>
            <person name="Thorpe A."/>
            <person name="Torcasso W."/>
            <person name="Tracey A."/>
            <person name="Tromans A."/>
            <person name="Tsolas J."/>
            <person name="Wall M."/>
            <person name="Walsh J."/>
            <person name="Wang H."/>
            <person name="Weinstock K."/>
            <person name="West A.P."/>
            <person name="Willey D.L."/>
            <person name="Whitehead S.L."/>
            <person name="Wilming L."/>
            <person name="Wray P.W."/>
            <person name="Young L."/>
            <person name="Chen Y."/>
            <person name="Lovering R.C."/>
            <person name="Moschonas N.K."/>
            <person name="Siebert R."/>
            <person name="Fechtel K."/>
            <person name="Bentley D."/>
            <person name="Durbin R.M."/>
            <person name="Hubbard T."/>
            <person name="Doucette-Stamm L."/>
            <person name="Beck S."/>
            <person name="Smith D.R."/>
            <person name="Rogers J."/>
        </authorList>
    </citation>
    <scope>NUCLEOTIDE SEQUENCE [LARGE SCALE GENOMIC DNA]</scope>
</reference>
<reference key="7">
    <citation type="submission" date="2005-09" db="EMBL/GenBank/DDBJ databases">
        <authorList>
            <person name="Mural R.J."/>
            <person name="Istrail S."/>
            <person name="Sutton G.G."/>
            <person name="Florea L."/>
            <person name="Halpern A.L."/>
            <person name="Mobarry C.M."/>
            <person name="Lippert R."/>
            <person name="Walenz B."/>
            <person name="Shatkay H."/>
            <person name="Dew I."/>
            <person name="Miller J.R."/>
            <person name="Flanigan M.J."/>
            <person name="Edwards N.J."/>
            <person name="Bolanos R."/>
            <person name="Fasulo D."/>
            <person name="Halldorsson B.V."/>
            <person name="Hannenhalli S."/>
            <person name="Turner R."/>
            <person name="Yooseph S."/>
            <person name="Lu F."/>
            <person name="Nusskern D.R."/>
            <person name="Shue B.C."/>
            <person name="Zheng X.H."/>
            <person name="Zhong F."/>
            <person name="Delcher A.L."/>
            <person name="Huson D.H."/>
            <person name="Kravitz S.A."/>
            <person name="Mouchard L."/>
            <person name="Reinert K."/>
            <person name="Remington K.A."/>
            <person name="Clark A.G."/>
            <person name="Waterman M.S."/>
            <person name="Eichler E.E."/>
            <person name="Adams M.D."/>
            <person name="Hunkapiller M.W."/>
            <person name="Myers E.W."/>
            <person name="Venter J.C."/>
        </authorList>
    </citation>
    <scope>NUCLEOTIDE SEQUENCE [LARGE SCALE GENOMIC DNA]</scope>
</reference>
<reference key="8">
    <citation type="journal article" date="2004" name="Genome Res.">
        <title>The status, quality, and expansion of the NIH full-length cDNA project: the Mammalian Gene Collection (MGC).</title>
        <authorList>
            <consortium name="The MGC Project Team"/>
        </authorList>
    </citation>
    <scope>NUCLEOTIDE SEQUENCE [LARGE SCALE MRNA] (ISOFORM 1)</scope>
    <source>
        <tissue>Brain</tissue>
    </source>
</reference>
<reference key="9">
    <citation type="journal article" date="1999" name="Biochem. Biophys. Res. Commun.">
        <title>IkappaBalpha ubiquitination is catalyzed by an SCF-like complex containing Skp1, cullin-1, and two F-box/WD40-repeat proteins, betaTrCP1 and betaTrCP2.</title>
        <authorList>
            <person name="Suzuki H."/>
            <person name="Chiba T."/>
            <person name="Kobayashi M."/>
            <person name="Takeuchi M."/>
            <person name="Suzuki T."/>
            <person name="Ichiyama A."/>
            <person name="Ikenoue T."/>
            <person name="Omata M."/>
            <person name="Furuichi K."/>
            <person name="Tanaka K."/>
        </authorList>
    </citation>
    <scope>IDENTIFICATION IN THE SCF(BTRC) COMPLEX</scope>
    <scope>FUNCTION IN UBIQUITINATION OF NFKBIA</scope>
</reference>
<reference key="10">
    <citation type="journal article" date="1999" name="J. Biol. Chem.">
        <title>Common pathway for the ubiquitination of IkappaBalpha, IkappaBbeta, and IkappaBepsilon mediated by the F-box protein FWD1.</title>
        <authorList>
            <person name="Shirane M."/>
            <person name="Hatakeyama S."/>
            <person name="Hattori K."/>
            <person name="Nakayama K."/>
            <person name="Nakayama K."/>
        </authorList>
    </citation>
    <scope>INTERACTION WITH NFKBIB AND NFKBIE</scope>
    <scope>FUNCTION IN UBIQUITINATION OF NFKBIB AND NFKBIE</scope>
</reference>
<reference key="11">
    <citation type="journal article" date="1999" name="Genes Dev.">
        <title>The SCF(beta-TRCP)-ubiquitin ligase complex associates specifically with phosphorylated destruction motifs in I-kappa-B-alpha and beta-catenin and stimulates I-kappa-B-alpha ubiquitination in vitro.</title>
        <authorList>
            <person name="Winston J.T."/>
            <person name="Strack P."/>
            <person name="Beer-Romero P."/>
            <person name="Chu C.Y."/>
            <person name="Elledge S.J."/>
            <person name="Harper J.W."/>
        </authorList>
    </citation>
    <scope>FUNCTION</scope>
    <scope>PATHWAY</scope>
    <scope>IDENTIFICATION IN THE SCF(BTRC) COMPLEX</scope>
</reference>
<reference key="12">
    <citation type="journal article" date="2000" name="EMBO J.">
        <title>SCF(beta)(-TrCP) ubiquitin ligase-mediated processing of NF-kappaB p105 requires phosphorylation of its C-terminus by IkappaB kinase.</title>
        <authorList>
            <person name="Orian A."/>
            <person name="Gonen H."/>
            <person name="Bercovich B."/>
            <person name="Fajerman I."/>
            <person name="Eytan E."/>
            <person name="Israel A."/>
            <person name="Mercurio F."/>
            <person name="Iwai K."/>
            <person name="Schwartz A.L."/>
            <person name="Ciechanover A."/>
        </authorList>
    </citation>
    <scope>INTERACTION WITH NFKB1</scope>
    <scope>FUNCTION IN UBIQUITINATION OF NFKB1</scope>
    <scope>PATHWAY</scope>
</reference>
<reference key="13">
    <citation type="journal article" date="2000" name="J. Biol. Chem.">
        <title>Homodimer of two F-box proteins betaTrCP1 or betaTrCP2 binds to IkappaBalpha for signal-dependent ubiquitination.</title>
        <authorList>
            <person name="Suzuki H."/>
            <person name="Chiba T."/>
            <person name="Suzuki T."/>
            <person name="Fujita T."/>
            <person name="Ikenoue T."/>
            <person name="Omata M."/>
            <person name="Furuichi K."/>
            <person name="Shikama H."/>
            <person name="Tanaka K."/>
        </authorList>
    </citation>
    <scope>SELF-ASSOCIATION</scope>
    <scope>INTERACTION WITH FBXW11 AND NFKBIA</scope>
    <scope>FUNCTION IN UBIQUITINATION OF NFKBIA</scope>
</reference>
<reference key="14">
    <citation type="journal article" date="2000" name="Mol. Cell">
        <title>The hPLIC proteins may provide a link between the ubiquitination machinery and the proteasome.</title>
        <authorList>
            <person name="Kleijnen M.F."/>
            <person name="Shih A.H."/>
            <person name="Zhou P."/>
            <person name="Kumar S."/>
            <person name="Soccio R.E."/>
            <person name="Kedersha N.L."/>
            <person name="Gill G."/>
            <person name="Howley P.M."/>
        </authorList>
    </citation>
    <scope>INTERACTION WITH UBQLN1</scope>
    <source>
        <tissue>B-cell</tissue>
    </source>
</reference>
<reference key="15">
    <citation type="journal article" date="2001" name="Mol. Biol. Cell">
        <title>Ligand-dependent degradation of Smad3 by a ubiquitin ligase complex of ROC1 and associated proteins.</title>
        <authorList>
            <person name="Fukuchi M."/>
            <person name="Imamura T."/>
            <person name="Chiba T."/>
            <person name="Ebisawa T."/>
            <person name="Kawabata M."/>
            <person name="Tanaka K."/>
            <person name="Miyazono K."/>
        </authorList>
    </citation>
    <scope>INTERACTION WITH PHOSPHORYLATED SMAD3</scope>
    <scope>FUNCTION IN SMAD3 UBIQUITINATION</scope>
</reference>
<reference key="16">
    <citation type="journal article" date="2001" name="Mol. Cell. Biol.">
        <title>ATF4 degradation relies on a phosphorylation-dependent interaction with the SCF(betaTrCP) ubiquitin ligase.</title>
        <authorList>
            <person name="Lassot I."/>
            <person name="Segeral E."/>
            <person name="Berlioz-Torrent C."/>
            <person name="Durand H."/>
            <person name="Groussin L."/>
            <person name="Hai T."/>
            <person name="Benarous R."/>
            <person name="Margottin-Goguet F."/>
        </authorList>
    </citation>
    <scope>INTERACTION WITH PHOSPHORYLATED ATF4</scope>
    <scope>FUNCTION IN ATF4 UBIQUITINATION</scope>
</reference>
<reference key="17">
    <citation type="journal article" date="2001" name="Mol. Cell. Biol.">
        <title>Shared pathways of IkappaB kinase-induced SCF(betaTrCP)-mediated ubiquitination and degradation for the NF-kappaB precursor p105 and IkappaBalpha.</title>
        <authorList>
            <person name="Heissmeyer V."/>
            <person name="Krappmann D."/>
            <person name="Hatada E.N."/>
            <person name="Scheidereit C."/>
        </authorList>
    </citation>
    <scope>FUNCTION</scope>
    <scope>PATHWAY</scope>
</reference>
<reference key="18">
    <citation type="journal article" date="2002" name="J. Biol. Chem.">
        <title>Genetic evidence for the essential role of beta-transducin repeat-containing protein in the inducible processing of NF-kappa B2/p100.</title>
        <authorList>
            <person name="Fong A."/>
            <person name="Sun S.C."/>
        </authorList>
    </citation>
    <scope>FUNCTION IN NFKB2 UBIQUITINATION</scope>
</reference>
<reference key="19">
    <citation type="journal article" date="2002" name="J. Cell Sci.">
        <title>Regulation of S33/S37 phosphorylated beta-catenin in normal and transformed cells.</title>
        <authorList>
            <person name="Sadot E."/>
            <person name="Conacci-Sorrell M."/>
            <person name="Zhurinsky J."/>
            <person name="Shnizer D."/>
            <person name="Lando Z."/>
            <person name="Zharhary D."/>
            <person name="Kam Z."/>
            <person name="Ben-Ze'ev A."/>
            <person name="Geiger B."/>
        </authorList>
    </citation>
    <scope>INTERACTION WITH PHOSPHORYLATED CTNNB1</scope>
</reference>
<reference key="20">
    <citation type="journal article" date="2002" name="Oncogene">
        <title>CK2-dependent phosphorylation of the E2 ubiquitin conjugating enzyme UBC3B induces its interaction with beta-TrCP and enhances beta-catenin degradation.</title>
        <authorList>
            <person name="Semplici F."/>
            <person name="Meggio F."/>
            <person name="Pinna L.A."/>
            <person name="Oliviero S."/>
        </authorList>
    </citation>
    <scope>INTERACTION WITH CDC34 AND UBE2R2</scope>
</reference>
<reference key="21">
    <citation type="journal article" date="2003" name="Dev. Cell">
        <title>Prophase destruction of Emi1 by the SCF(betaTrCP/Slimb) ubiquitin ligase activates the anaphase promoting complex to allow progression beyond prometaphase.</title>
        <authorList>
            <person name="Margottin-Goguet F."/>
            <person name="Hsu J.Y."/>
            <person name="Loktev A."/>
            <person name="Hsieh H.-M."/>
            <person name="Reimann J.D.R."/>
            <person name="Jackson P.K."/>
        </authorList>
    </citation>
    <scope>INTERACTION WITH PHOSPHORYLATED FBXO5</scope>
    <scope>FUNCTION IN FBXO5 UBIQUITINATION</scope>
</reference>
<reference key="22">
    <citation type="journal article" date="2003" name="Genes Dev.">
        <title>SCFbeta-TRCP links Chk1 signaling to degradation of the Cdc25A protein phosphatase.</title>
        <authorList>
            <person name="Jin J."/>
            <person name="Shirogane T."/>
            <person name="Xu L."/>
            <person name="Nalepa G."/>
            <person name="Qin J."/>
            <person name="Elledge S.J."/>
            <person name="Harper J.W."/>
        </authorList>
    </citation>
    <scope>INTERACTION WITH PHOSPHORYLATED CDC25A</scope>
    <scope>FUNCTION IN CDC25A UBIQUITINATION</scope>
</reference>
<reference key="23">
    <citation type="journal article" date="2003" name="J. Biol. Chem.">
        <title>Regulation of the discs large tumor suppressor by a phosphorylation-dependent interaction with the beta-TrCP ubiquitin ligase receptor.</title>
        <authorList>
            <person name="Mantovani F."/>
            <person name="Banks L."/>
        </authorList>
    </citation>
    <scope>INTERACTION WITH PHOSPHORYLATED DLG1</scope>
    <scope>FUNCTION IN DLG1 UBIQUITINATION</scope>
</reference>
<reference key="24">
    <citation type="journal article" date="2003" name="Nature">
        <title>Degradation of Cdc25A by beta-TrCP during S phase and in response to DNA damage.</title>
        <authorList>
            <person name="Busino L."/>
            <person name="Donzelli M."/>
            <person name="Chiesa M."/>
            <person name="Guardavaccaro D."/>
            <person name="Ganoth D."/>
            <person name="Dorrello N.V."/>
            <person name="Hershko A."/>
            <person name="Pagano M."/>
            <person name="Draetta G.F."/>
        </authorList>
    </citation>
    <scope>INTERACTION WITH PHOSPHORYLATED CDC25A</scope>
    <scope>FUNCTION IN CDC25A UBIQUITINATION</scope>
</reference>
<reference key="25">
    <citation type="journal article" date="2004" name="J. Biol. Chem.">
        <title>Smad4 protein stability is regulated by ubiquitin ligase SCF beta-TrCP1.</title>
        <authorList>
            <person name="Wan M."/>
            <person name="Tang Y."/>
            <person name="Tytler E.M."/>
            <person name="Lu C."/>
            <person name="Jin B."/>
            <person name="Vickers S.M."/>
            <person name="Yang L."/>
            <person name="Shi X."/>
            <person name="Cao X."/>
        </authorList>
    </citation>
    <scope>INTERACTION WITH PHOSPHORYLATED SMAD4</scope>
    <scope>FUNCTION IN SMAD4 UBIQUITINATION</scope>
</reference>
<reference key="26">
    <citation type="journal article" date="2004" name="Mol. Cell. Biol.">
        <title>Dual effects of IkappaB kinase beta-mediated phosphorylation on p105 fate: SCF(beta-TrCP)-dependent degradation and SCF(beta-TrCP)-independent processing.</title>
        <authorList>
            <person name="Cohen S."/>
            <person name="Achbert-Weiner H."/>
            <person name="Ciechanover A."/>
        </authorList>
    </citation>
    <scope>FUNCTION</scope>
</reference>
<reference key="27">
    <citation type="journal article" date="2004" name="Nat. Cell Biol.">
        <title>Dual regulation of Snail by GSK-3beta-mediated phosphorylation in control of epithelial-mesenchymal transition.</title>
        <authorList>
            <person name="Zhou B.P."/>
            <person name="Deng J."/>
            <person name="Xia W."/>
            <person name="Xu J."/>
            <person name="Li Y.M."/>
            <person name="Gunduz M."/>
            <person name="Hung M.C."/>
        </authorList>
    </citation>
    <scope>FUNCTION</scope>
    <scope>INTERACTION WITH SNAI1</scope>
</reference>
<reference key="28">
    <citation type="journal article" date="2005" name="J. Biol. Chem.">
        <title>Wnt-dependent regulation of the E-cadherin repressor snail.</title>
        <authorList>
            <person name="Yook J.I."/>
            <person name="Li X.Y."/>
            <person name="Ota I."/>
            <person name="Fearon E.R."/>
            <person name="Weiss S.J."/>
        </authorList>
    </citation>
    <scope>INTERACTION WITH SNAI1</scope>
</reference>
<reference key="29">
    <citation type="journal article" date="2005" name="J. Biol. Chem.">
        <title>SCFbeta-TRCP controls clock-dependent transcription via casein kinase 1-dependent degradation of the mammalian period-1 (Per1) protein.</title>
        <authorList>
            <person name="Shirogane T."/>
            <person name="Jin J."/>
            <person name="Ang X.L."/>
            <person name="Harper J.W."/>
        </authorList>
    </citation>
    <scope>FUNCTION IN CIRCADIAN CLOCK</scope>
    <scope>INTERACTION WITH PER1 AND PER3</scope>
</reference>
<reference key="30">
    <citation type="journal article" date="2006" name="Genes Dev.">
        <title>DDB1 functions as a linker to recruit receptor WD40 proteins to CUL4-ROC1 ubiquitin ligases.</title>
        <authorList>
            <person name="He Y.J."/>
            <person name="McCall C.M."/>
            <person name="Hu J."/>
            <person name="Zeng Y."/>
            <person name="Xiong Y."/>
        </authorList>
    </citation>
    <scope>INTERACTION WITH CUL4A AND DDB1</scope>
</reference>
<reference key="31">
    <citation type="journal article" date="2006" name="Mol. Cell. Biol.">
        <title>Multisite protein kinase A and glycogen synthase kinase 3beta phosphorylation leads to Gli3 ubiquitination by SCFbetaTrCP.</title>
        <authorList>
            <person name="Tempe D."/>
            <person name="Casas M."/>
            <person name="Karaz S."/>
            <person name="Blanchet-Tournier M.F."/>
            <person name="Concordet J.P."/>
        </authorList>
    </citation>
    <scope>INTERACTION WITH GLI3</scope>
</reference>
<reference key="32">
    <citation type="journal article" date="2006" name="Proc. Natl. Acad. Sci. U.S.A.">
        <title>Evidence for the direct involvement of {beta}TrCP in Gli3 protein processing.</title>
        <authorList>
            <person name="Wang B."/>
            <person name="Li Y."/>
        </authorList>
    </citation>
    <scope>FUNCTION</scope>
</reference>
<reference key="33">
    <citation type="journal article" date="2008" name="Cancer Res.">
        <title>HSF1 as a mitotic regulator: phosphorylation of HSF1 by Plk1 is essential for mitotic progression.</title>
        <authorList>
            <person name="Lee Y.J."/>
            <person name="Kim E.H."/>
            <person name="Lee J.S."/>
            <person name="Jeoung D."/>
            <person name="Bae S."/>
            <person name="Kwon S.H."/>
            <person name="Lee Y.S."/>
        </authorList>
    </citation>
    <scope>INTERACTION WITH HSF1</scope>
</reference>
<reference key="34">
    <citation type="journal article" date="2008" name="Nature">
        <title>Control of chromosome stability by the beta-TrCP-REST-Mad2 axis.</title>
        <authorList>
            <person name="Guardavaccaro D."/>
            <person name="Frescas D."/>
            <person name="Dorrello N.V."/>
            <person name="Peschiaroli A."/>
            <person name="Multani A.S."/>
            <person name="Cardozo T."/>
            <person name="Lasorella A."/>
            <person name="Iavarone A."/>
            <person name="Chang S."/>
            <person name="Hernando E."/>
            <person name="Pagano M."/>
        </authorList>
    </citation>
    <scope>FUNCTION</scope>
    <scope>INTERACTION WITH REST</scope>
</reference>
<reference key="35">
    <citation type="journal article" date="2010" name="Mol. Cancer Res.">
        <title>Clusterin facilitates COMMD1 and I-kappaB degradation to enhance NF-kappaB activity in prostate cancer cells.</title>
        <authorList>
            <person name="Zoubeidi A."/>
            <person name="Ettinger S."/>
            <person name="Beraldi E."/>
            <person name="Hadaschik B."/>
            <person name="Zardan A."/>
            <person name="Klomp L.W."/>
            <person name="Nelson C.C."/>
            <person name="Rennie P.S."/>
            <person name="Gleave M.E."/>
        </authorList>
    </citation>
    <scope>INTERACTION WITH CLU</scope>
</reference>
<reference key="36">
    <citation type="journal article" date="2011" name="Mol. Cell">
        <title>mTOR drives its own activation via SCF(betaTrCP)-dependent degradation of the mTOR inhibitor DEPTOR.</title>
        <authorList>
            <person name="Gao D."/>
            <person name="Inuzuka H."/>
            <person name="Tan M.K."/>
            <person name="Fukushima H."/>
            <person name="Locasale J.W."/>
            <person name="Liu P."/>
            <person name="Wan L."/>
            <person name="Zhai B."/>
            <person name="Chin Y.R."/>
            <person name="Shaik S."/>
            <person name="Lyssiotis C.A."/>
            <person name="Gygi S.P."/>
            <person name="Toker A."/>
            <person name="Cantley L.C."/>
            <person name="Asara J.M."/>
            <person name="Harper J.W."/>
            <person name="Wei W."/>
        </authorList>
    </citation>
    <scope>FUNCTION</scope>
    <scope>PATHWAY</scope>
    <scope>IDENTIFICATION IN THE SCF(BTRC) COMPLEX</scope>
    <scope>MUTAGENESIS OF ARG-510</scope>
</reference>
<reference key="37">
    <citation type="journal article" date="2011" name="Mol. Cell">
        <title>DEPTOR, an mTOR inhibitor, is a physiological substrate of SCF(betaTrCP) E3 ubiquitin ligase and regulates survival and autophagy.</title>
        <authorList>
            <person name="Zhao Y."/>
            <person name="Xiong X."/>
            <person name="Sun Y."/>
        </authorList>
    </citation>
    <scope>FUNCTION</scope>
    <scope>PATHWAY</scope>
    <scope>IDENTIFICATION IN THE SCF(BTRC) COMPLEX</scope>
</reference>
<reference key="38">
    <citation type="journal article" date="2011" name="Mol. Cell">
        <title>mTOR generates an auto-amplification loop by triggering the betaTrCP- and CK1alpha-dependent degradation of DEPTOR.</title>
        <authorList>
            <person name="Duan S."/>
            <person name="Skaar J.R."/>
            <person name="Kuchay S."/>
            <person name="Toschi A."/>
            <person name="Kanarek N."/>
            <person name="Ben-Neriah Y."/>
            <person name="Pagano M."/>
        </authorList>
    </citation>
    <scope>FUNCTION</scope>
    <scope>PATHWAY</scope>
    <scope>IDENTIFICATION IN THE SCF(BTRC) COMPLEX</scope>
</reference>
<reference key="39">
    <citation type="journal article" date="2011" name="Nat. Cell Biol.">
        <title>Deubiquitylase HAUSP stabilizes REST and promotes maintenance of neural progenitor cells.</title>
        <authorList>
            <person name="Huang Z."/>
            <person name="Wu Q."/>
            <person name="Guryanova O.A."/>
            <person name="Cheng L."/>
            <person name="Shou W."/>
            <person name="Rich J.N."/>
            <person name="Bao S."/>
        </authorList>
    </citation>
    <scope>FUNCTION</scope>
</reference>
<reference key="40">
    <citation type="journal article" date="2011" name="PLoS ONE">
        <title>Regulation of interleukin-10 receptor ubiquitination and stability by beta-TrCP-containing ubiquitin E3 ligase.</title>
        <authorList>
            <person name="Jiang H."/>
            <person name="Lu Y."/>
            <person name="Yuan L."/>
            <person name="Liu J."/>
        </authorList>
    </citation>
    <scope>INTERACTION WITH IL10RA</scope>
    <scope>FUNCTION</scope>
</reference>
<reference key="41">
    <citation type="journal article" date="2013" name="PLoS Pathog.">
        <title>Poxvirus targeting of E3 ligase beta-TrCP by molecular mimicry: a mechanism to inhibit NF-kappaB activation and promote immune evasion and virulence.</title>
        <authorList>
            <person name="Mansur D.S."/>
            <person name="Maluquer de Motes C."/>
            <person name="Unterholzner L."/>
            <person name="Sumner R.P."/>
            <person name="Ferguson B.J."/>
            <person name="Ren H."/>
            <person name="Strnadova P."/>
            <person name="Bowie A.G."/>
            <person name="Smith G.L."/>
        </authorList>
    </citation>
    <scope>INTERACTION WITH VACCINIA VIRUS PROTEIN A49 (MICROBIAL INFECTION)</scope>
</reference>
<reference key="42">
    <citation type="journal article" date="2015" name="Eur. J. Cell Biol.">
        <title>Cep68 can be regulated by Nek2 and SCF complex.</title>
        <authorList>
            <person name="Man X."/>
            <person name="Megraw T.L."/>
            <person name="Lim Y.P."/>
        </authorList>
    </citation>
    <scope>FUNCTION</scope>
    <scope>INTERACTION WITH CEP68</scope>
</reference>
<reference key="43">
    <citation type="journal article" date="2015" name="Nat. Cell Biol.">
        <title>Degradation of Cep68 and PCNT cleavage mediate Cep215 removal from the PCM to allow centriole separation, disengagement and licensing.</title>
        <authorList>
            <person name="Pagan J.K."/>
            <person name="Marzio A."/>
            <person name="Jones M.J."/>
            <person name="Saraf A."/>
            <person name="Jallepalli P.V."/>
            <person name="Florens L."/>
            <person name="Washburn M.P."/>
            <person name="Pagano M."/>
        </authorList>
    </citation>
    <scope>FUNCTION</scope>
    <scope>INTERACTION WITH CEP68</scope>
</reference>
<reference key="44">
    <citation type="journal article" date="2018" name="Science">
        <title>C1orf106 is a colitis risk gene that regulates stability of epithelial adherens junctions.</title>
        <authorList>
            <person name="Mohanan V."/>
            <person name="Nakata T."/>
            <person name="Desch A.N."/>
            <person name="Levesque C."/>
            <person name="Boroughs A."/>
            <person name="Guzman G."/>
            <person name="Cao Z."/>
            <person name="Creasey E."/>
            <person name="Yao J."/>
            <person name="Boucher G."/>
            <person name="Charron G."/>
            <person name="Bhan A.K."/>
            <person name="Schenone M."/>
            <person name="Carr S.A."/>
            <person name="Reinecker H.C."/>
            <person name="Daly M.J."/>
            <person name="Rioux J.D."/>
            <person name="Lassen K.G."/>
            <person name="Xavier R.J."/>
        </authorList>
    </citation>
    <scope>INTERACTION WITH INAVA</scope>
</reference>
<reference key="45">
    <citation type="journal article" date="2021" name="Cell Death Differ.">
        <title>Deubiquitinase OTUD5 is a positive regulator of mTORC1 and mTORC2 signaling pathways.</title>
        <authorList>
            <person name="Cho J.H."/>
            <person name="Kim K."/>
            <person name="Kim S.A."/>
            <person name="Park S."/>
            <person name="Park B.O."/>
            <person name="Kim J.H."/>
            <person name="Kim S.Y."/>
            <person name="Kwon M.J."/>
            <person name="Han M.H."/>
            <person name="Lee S.B."/>
            <person name="Park B.C."/>
            <person name="Park S.G."/>
            <person name="Kim J.H."/>
            <person name="Kim S."/>
        </authorList>
    </citation>
    <scope>FUNCTION</scope>
    <scope>UBIQUITINATION</scope>
    <scope>DEUBIQUITINATION</scope>
</reference>
<reference key="46">
    <citation type="journal article" date="2023" name="Mol. Cell">
        <title>A central role for regulated protein stability in the control of TFE3 and MITF by nutrients.</title>
        <authorList>
            <person name="Nardone C."/>
            <person name="Palanski B.A."/>
            <person name="Scott D.C."/>
            <person name="Timms R.T."/>
            <person name="Barber K.W."/>
            <person name="Gu X."/>
            <person name="Mao A."/>
            <person name="Leng Y."/>
            <person name="Watson E.V."/>
            <person name="Schulman B.A."/>
            <person name="Cole P.A."/>
            <person name="Elledge S.J."/>
        </authorList>
    </citation>
    <scope>FUNCTION</scope>
    <scope>PATHWAY</scope>
    <scope>IDENTIFICATION IN THE SCF(BTRC) COMPLEX</scope>
    <scope>MUTAGENESIS OF TYR-307; ARG-321 AND ARG-510</scope>
</reference>
<reference key="47">
    <citation type="journal article" date="2024" name="Nat. Commun.">
        <title>The phosphatase DUSP22 inhibits UBR2-mediated K63-ubiquitination and activation of Lck downstream of TCR signalling.</title>
        <authorList>
            <person name="Shih Y.C."/>
            <person name="Chen H.F."/>
            <person name="Wu C.Y."/>
            <person name="Ciou Y.R."/>
            <person name="Wang C.W."/>
            <person name="Chuang H.C."/>
            <person name="Tan T.H."/>
        </authorList>
    </citation>
    <scope>FUNCTION</scope>
    <scope>INTERACTION WITH UBR2</scope>
</reference>
<reference key="48">
    <citation type="journal article" date="2003" name="Mol. Cell">
        <title>Structure of a beta-TrCP1-Skp1-beta-catenin complex: destruction motif binding and lysine specificity of the SCF(beta-TrCP1) ubiquitin ligase.</title>
        <authorList>
            <person name="Wu G."/>
            <person name="Xu G."/>
            <person name="Schulman B.A."/>
            <person name="Jeffrey P.D."/>
            <person name="Harper J.W."/>
            <person name="Pavletich N.P."/>
        </authorList>
    </citation>
    <scope>X-RAY CRYSTALLOGRAPHY (2.95 ANGSTROMS) OF 175-605 IN COMPLEX WITH SKP1 AND CTNNB1</scope>
</reference>
<reference key="49">
    <citation type="journal article" date="2007" name="Cell">
        <title>Suprafacial orientation of the SCFCdc4 dimer accommodates multiple geometries for substrate ubiquitination.</title>
        <authorList>
            <person name="Tang X."/>
            <person name="Orlicky S."/>
            <person name="Lin Z."/>
            <person name="Willems A."/>
            <person name="Neculai D."/>
            <person name="Ceccarelli D."/>
            <person name="Mercurio F."/>
            <person name="Shilton B.H."/>
            <person name="Sicheri F."/>
            <person name="Tyers M."/>
        </authorList>
    </citation>
    <scope>X-RAY CRYSTALLOGRAPHY (2.5 ANGSTROMS) OF 128-177</scope>
    <scope>DOMAIN</scope>
    <scope>SUBUNIT</scope>
</reference>
<accession>Q9Y297</accession>
<accession>B5MD49</accession>
<accession>Q5W141</accession>
<accession>Q5W142</accession>
<accession>Q9Y213</accession>
<comment type="function">
    <text evidence="1 3 4 5 6 8 9 10 11 13 14 15 16 17 18 19 20 21 23 24 28 32 33 34 35 36 38 39 41 43 45 46">Substrate recognition component of a SCF (SKP1-CUL1-F-box protein) E3 ubiquitin-protein ligase complex which mediates the ubiquitination and subsequent proteasomal degradation of target proteins (PubMed:10066435, PubMed:10497169, PubMed:10644755, PubMed:10835356, PubMed:11158290, PubMed:11238952, PubMed:11359933, PubMed:11994270, PubMed:12791267, PubMed:12902344, PubMed:14603323, PubMed:14681206, PubMed:14988407, PubMed:15448698, PubMed:15917222, PubMed:16371461, PubMed:22017875, PubMed:22017876, PubMed:22017877, PubMed:22087322, PubMed:25503564, PubMed:25704143, PubMed:36608670, PubMed:9859996, PubMed:9990852). Recognizes and binds to phosphorylated target proteins (PubMed:10066435, PubMed:10497169, PubMed:10644755, PubMed:10835356, PubMed:11158290, PubMed:11238952, PubMed:11359933, PubMed:11994270, PubMed:12791267, PubMed:12902344, PubMed:14603323, PubMed:14681206, PubMed:14988407, PubMed:15448698, PubMed:15917222, PubMed:16371461, PubMed:22017875, PubMed:22017876, PubMed:22017877, PubMed:22087322, PubMed:25503564, PubMed:25704143, PubMed:36608670, PubMed:9859996, PubMed:9990852). SCF(BTRC) mediates the ubiquitination of CTNNB1 and participates in Wnt signaling (PubMed:12077367, PubMed:12820959). SCF(BTRC) mediates the ubiquitination of phosphorylated NFKB1, ATF4, CDC25A, DLG1, FBXO5, PER1, SMAD3, SMAD4, SNAI1 and probably NFKB2 (PubMed:10835356, PubMed:11238952, PubMed:14603323, PubMed:14681206). SCF(BTRC) mediates the ubiquitination of NFKBIA, NFKBIB and NFKBIE; the degradation frees the associated NFKB1 to translocate into the nucleus and to activate transcription (PubMed:10066435, PubMed:10497169, PubMed:10644755, PubMed:9859996). Ubiquitination of NFKBIA occurs at 'Lys-21' and 'Lys-22' (PubMed:10066435). The SCF(FBXW11) complex also regulates NF-kappa-B by mediating ubiquitination of phosphorylated NFKB1: specifically ubiquitinates the p105 form of NFKB1, leading to its degradation (PubMed:10835356, PubMed:11158290, PubMed:14673179). SCF(BTRC) mediates the ubiquitination of CEP68; this is required for centriole separation during mitosis (PubMed:25503564, PubMed:25704143). SCF(BTRC) mediates the ubiquitination and subsequent degradation of nuclear NFE2L1 (By similarity). Has an essential role in the control of the clock-dependent transcription via degradation of phosphorylated PER1 and PER2 (PubMed:15917222). May be involved in ubiquitination and subsequent proteasomal degradation through a DBB1-CUL4 E3 ubiquitin-protein ligase. Required for activation of NFKB-mediated transcription by IL1B, MAP3K14, MAP3K1, IKBKB and TNF. Required for proteolytic processing of GLI3 (PubMed:16371461). Mediates ubiquitination of REST, thereby leading to its proteasomal degradation (PubMed:18354482, PubMed:21258371). SCF(BTRC) mediates the ubiquitination and subsequent proteasomal degradation of KLF4; thereby negatively regulating cell pluripotency maintenance and embryogenesis (By similarity). SCF(BTRC) acts as a regulator of mTORC1 signaling pathway by catalyzing ubiquitination and subsequent proteasomal degradation of phosphorylated DEPTOR, TFE3 and MITF (PubMed:22017875, PubMed:22017876, PubMed:22017877, PubMed:33110214, PubMed:36608670). SCF(BTRC) directs 'Lys-48'-linked ubiquitination of UBR2 in the T-cell receptor signaling pathway (PubMed:38225265).</text>
</comment>
<comment type="pathway">
    <text evidence="6 8 33 34 35 42 45 46">Protein modification; protein ubiquitination.</text>
</comment>
<comment type="subunit">
    <text evidence="1 3 4 5 6 7 9 10 12 13 14 15 16 17 19 20 21 22 23 25 26 27 28 29 30 33 34 35 36 38 39 40 42 43 46">Homodimer. Self-associates. Component of the SCF(BTRC) complex formed of CUL1, SKP1, RBX1 and a BTRC dimer (PubMed:10066435, PubMed:22017875, PubMed:22017876, PubMed:22017877, PubMed:36608670, PubMed:9990852). Direct interaction with SKP1 occurs via the F-box domain. Interacts with phosphorylated ubiquitination substrates SMAD3 and SMAD4. Interacts with phosphorylated ubiquitination substrates CTNNB1, NFKBIA, NFKBIB, NFKBIE, NFKB1/nuclear factor NF-kappa-B p105 subunit, ATF4, CDC25A, DLG1, FBXO5 and SNAI1; the interaction requires the phosphorylation of the 2 serine residues in the substrate destruction motif D-S-G-X(2,3,4)-S. Binds UBQLN1. Interacts with CDC34 and UBE2R2. Interacts with FBXW11. Interacts with CUL4A and DDB1. Part of a SCF(BTRC)-like complex lacking CUL1, which is associated with phosphorylated NKBIA and RELA; RELA interacts directly with NFKBIA. Interacts with the phosphorylated form of GLI3. Interacts with CLU. Interacts with PER1 (phosphorylated), PER2 (phosphorylated) and PER3. Interacts with phosphorylated ubiquitination substrate CEP68 (PubMed:25503564, PubMed:25704143). Interacts with ZC3H12A; this interaction occurs when ZC3H12A is phosphorylated in a IKBKB/IKKB-dependent manner (By similarity). Interacts with HSF1; this interaction occurs during mitosis and induces HSF1 ubiquitin-dependent degradation, a process inhibited by CDC20 (PubMed:18794143). Interacts with NFE2L1 (By similarity). Interacts with INAVA (PubMed:29420262). Interacts with IL10RA; this interaction leads to IL10RA ubiquitination and subsequent degradation (PubMed:22087322). Interacts with REST (PubMed:18354482). Interacts with KLF4; this interaction leads to KLF4 ubiquitination and subsequent degradation (By similarity). Interacts with UBR2, as part of a SCF(BTRC) complex; the interaction mediates 'Lys-48'-linked ubiquitination of UBR2 and is regulated by DUSP22 in the T-cell receptor signaling pathway (PubMed:38225265).</text>
</comment>
<comment type="subunit">
    <text evidence="37">(Microbial infection) Interacts with vaccinia virus A49; this interaction inhibits NF-kappa-B activation.</text>
</comment>
<comment type="subunit">
    <text evidence="44">(Microbial infection) Interacts with HIV-1 Vpu.</text>
</comment>
<comment type="interaction">
    <interactant intactId="EBI-307461">
        <id>Q9Y297</id>
    </interactant>
    <interactant intactId="EBI-6169747">
        <id>Q5JTC6</id>
        <label>AMER1</label>
    </interactant>
    <organismsDiffer>false</organismsDiffer>
    <experiments>7</experiments>
</comment>
<comment type="interaction">
    <interactant intactId="EBI-307461">
        <id>Q9Y297</id>
    </interactant>
    <interactant intactId="EBI-492498">
        <id>P18848</id>
        <label>ATF4</label>
    </interactant>
    <organismsDiffer>false</organismsDiffer>
    <experiments>21</experiments>
</comment>
<comment type="interaction">
    <interactant intactId="EBI-307461">
        <id>Q9Y297</id>
    </interactant>
    <interactant intactId="EBI-4400025">
        <id>Q9Y2T1</id>
        <label>AXIN2</label>
    </interactant>
    <organismsDiffer>false</organismsDiffer>
    <experiments>3</experiments>
</comment>
<comment type="interaction">
    <interactant intactId="EBI-307461">
        <id>Q9Y297</id>
    </interactant>
    <interactant intactId="EBI-9051024">
        <id>Q76N32</id>
        <label>CEP68</label>
    </interactant>
    <organismsDiffer>false</organismsDiffer>
    <experiments>2</experiments>
</comment>
<comment type="interaction">
    <interactant intactId="EBI-307461">
        <id>Q9Y297</id>
    </interactant>
    <interactant intactId="EBI-486838">
        <id>Q7L5N1</id>
        <label>COPS6</label>
    </interactant>
    <organismsDiffer>false</organismsDiffer>
    <experiments>2</experiments>
</comment>
<comment type="interaction">
    <interactant intactId="EBI-307461">
        <id>Q9Y297</id>
    </interactant>
    <interactant intactId="EBI-491549">
        <id>P35222</id>
        <label>CTNNB1</label>
    </interactant>
    <organismsDiffer>false</organismsDiffer>
    <experiments>8</experiments>
</comment>
<comment type="interaction">
    <interactant intactId="EBI-307461">
        <id>Q9Y297</id>
    </interactant>
    <interactant intactId="EBI-359390">
        <id>Q13616</id>
        <label>CUL1</label>
    </interactant>
    <organismsDiffer>false</organismsDiffer>
    <experiments>13</experiments>
</comment>
<comment type="interaction">
    <interactant intactId="EBI-307461">
        <id>Q9Y297</id>
    </interactant>
    <interactant intactId="EBI-357481">
        <id>Q12959</id>
        <label>DLG1</label>
    </interactant>
    <organismsDiffer>false</organismsDiffer>
    <experiments>2</experiments>
</comment>
<comment type="interaction">
    <interactant intactId="EBI-307461">
        <id>Q9Y297</id>
    </interactant>
    <interactant intactId="EBI-10821567">
        <id>P10070</id>
        <label>GLI2</label>
    </interactant>
    <organismsDiffer>false</organismsDiffer>
    <experiments>4</experiments>
</comment>
<comment type="interaction">
    <interactant intactId="EBI-307461">
        <id>Q9Y297</id>
    </interactant>
    <interactant intactId="EBI-747754">
        <id>P28799</id>
        <label>GRN</label>
    </interactant>
    <organismsDiffer>false</organismsDiffer>
    <experiments>3</experiments>
</comment>
<comment type="interaction">
    <interactant intactId="EBI-307461">
        <id>Q9Y297</id>
    </interactant>
    <interactant intactId="EBI-1031656">
        <id>Q13651</id>
        <label>IL10RA</label>
    </interactant>
    <organismsDiffer>false</organismsDiffer>
    <experiments>6</experiments>
</comment>
<comment type="interaction">
    <interactant intactId="EBI-307461">
        <id>Q9Y297</id>
    </interactant>
    <interactant intactId="EBI-7545562">
        <id>Q3KP66</id>
        <label>INAVA</label>
    </interactant>
    <organismsDiffer>false</organismsDiffer>
    <experiments>2</experiments>
</comment>
<comment type="interaction">
    <interactant intactId="EBI-307461">
        <id>Q9Y297</id>
    </interactant>
    <interactant intactId="EBI-1055254">
        <id>Q8WXH2</id>
        <label>JPH3</label>
    </interactant>
    <organismsDiffer>false</organismsDiffer>
    <experiments>3</experiments>
</comment>
<comment type="interaction">
    <interactant intactId="EBI-307461">
        <id>Q9Y297</id>
    </interactant>
    <interactant intactId="EBI-492564">
        <id>Q02750</id>
        <label>MAP2K1</label>
    </interactant>
    <organismsDiffer>false</organismsDiffer>
    <experiments>3</experiments>
</comment>
<comment type="interaction">
    <interactant intactId="EBI-307461">
        <id>Q9Y297</id>
    </interactant>
    <interactant intactId="EBI-389668">
        <id>Q00987</id>
        <label>MDM2</label>
    </interactant>
    <organismsDiffer>false</organismsDiffer>
    <experiments>9</experiments>
</comment>
<comment type="interaction">
    <interactant intactId="EBI-307461">
        <id>Q9Y297</id>
    </interactant>
    <interactant intactId="EBI-748312">
        <id>P49821</id>
        <label>NDUFV1</label>
    </interactant>
    <organismsDiffer>false</organismsDiffer>
    <experiments>3</experiments>
</comment>
<comment type="interaction">
    <interactant intactId="EBI-307461">
        <id>Q9Y297</id>
    </interactant>
    <interactant intactId="EBI-716247">
        <id>Q15843</id>
        <label>NEDD8</label>
    </interactant>
    <organismsDiffer>false</organismsDiffer>
    <experiments>2</experiments>
</comment>
<comment type="interaction">
    <interactant intactId="EBI-307461">
        <id>Q9Y297</id>
    </interactant>
    <interactant intactId="EBI-726369">
        <id>Q16621</id>
        <label>NFE2</label>
    </interactant>
    <organismsDiffer>false</organismsDiffer>
    <experiments>3</experiments>
</comment>
<comment type="interaction">
    <interactant intactId="EBI-307461">
        <id>Q9Y297</id>
    </interactant>
    <interactant intactId="EBI-2007911">
        <id>Q16236</id>
        <label>NFE2L2</label>
    </interactant>
    <organismsDiffer>false</organismsDiffer>
    <experiments>2</experiments>
</comment>
<comment type="interaction">
    <interactant intactId="EBI-307461">
        <id>Q9Y297</id>
    </interactant>
    <interactant intactId="EBI-2859639">
        <id>Q5HYW2</id>
        <label>NHSL2</label>
    </interactant>
    <organismsDiffer>false</organismsDiffer>
    <experiments>3</experiments>
</comment>
<comment type="interaction">
    <interactant intactId="EBI-307461">
        <id>Q9Y297</id>
    </interactant>
    <interactant intactId="EBI-746202">
        <id>O00444</id>
        <label>PLK4</label>
    </interactant>
    <organismsDiffer>false</organismsDiffer>
    <experiments>4</experiments>
</comment>
<comment type="interaction">
    <interactant intactId="EBI-307461">
        <id>Q9Y297</id>
    </interactant>
    <interactant intactId="EBI-1384210">
        <id>Q99952</id>
        <label>PTPN18</label>
    </interactant>
    <organismsDiffer>false</organismsDiffer>
    <experiments>2</experiments>
</comment>
<comment type="interaction">
    <interactant intactId="EBI-307461">
        <id>Q9Y297</id>
    </interactant>
    <interactant intactId="EBI-12739708">
        <id>Q99952-1</id>
        <label>PTPN18</label>
    </interactant>
    <organismsDiffer>false</organismsDiffer>
    <experiments>2</experiments>
</comment>
<comment type="interaction">
    <interactant intactId="EBI-307461">
        <id>Q9Y297</id>
    </interactant>
    <interactant intactId="EBI-367390">
        <id>Q8WWW0</id>
        <label>RASSF5</label>
    </interactant>
    <organismsDiffer>false</organismsDiffer>
    <experiments>4</experiments>
</comment>
<comment type="interaction">
    <interactant intactId="EBI-307461">
        <id>Q9Y297</id>
    </interactant>
    <interactant intactId="EBI-960502">
        <id>Q8WWW0-2</id>
        <label>RASSF5</label>
    </interactant>
    <organismsDiffer>false</organismsDiffer>
    <experiments>3</experiments>
</comment>
<comment type="interaction">
    <interactant intactId="EBI-307461">
        <id>Q9Y297</id>
    </interactant>
    <interactant intactId="EBI-926706">
        <id>Q13127</id>
        <label>REST</label>
    </interactant>
    <organismsDiffer>false</organismsDiffer>
    <experiments>10</experiments>
</comment>
<comment type="interaction">
    <interactant intactId="EBI-307461">
        <id>Q9Y297</id>
    </interactant>
    <interactant intactId="EBI-307486">
        <id>P63208</id>
        <label>SKP1</label>
    </interactant>
    <organismsDiffer>false</organismsDiffer>
    <experiments>24</experiments>
</comment>
<comment type="interaction">
    <interactant intactId="EBI-307461">
        <id>Q9Y297</id>
    </interactant>
    <interactant intactId="EBI-347263">
        <id>Q13485</id>
        <label>SMAD4</label>
    </interactant>
    <organismsDiffer>false</organismsDiffer>
    <experiments>2</experiments>
</comment>
<comment type="interaction">
    <interactant intactId="EBI-307461">
        <id>Q9Y297</id>
    </interactant>
    <interactant intactId="EBI-1045459">
        <id>O95863</id>
        <label>SNAI1</label>
    </interactant>
    <organismsDiffer>false</organismsDiffer>
    <experiments>2</experiments>
</comment>
<comment type="interaction">
    <interactant intactId="EBI-307461">
        <id>Q9Y297</id>
    </interactant>
    <interactant intactId="EBI-624237">
        <id>O75410</id>
        <label>TACC1</label>
    </interactant>
    <organismsDiffer>false</organismsDiffer>
    <experiments>5</experiments>
</comment>
<comment type="interaction">
    <interactant intactId="EBI-307461">
        <id>Q9Y297</id>
    </interactant>
    <interactant intactId="EBI-12007872">
        <id>O75410-7</id>
        <label>TACC1</label>
    </interactant>
    <organismsDiffer>false</organismsDiffer>
    <experiments>6</experiments>
</comment>
<comment type="interaction">
    <interactant intactId="EBI-307461">
        <id>Q9Y297</id>
    </interactant>
    <interactant intactId="EBI-366083">
        <id>P04637</id>
        <label>TP53</label>
    </interactant>
    <organismsDiffer>false</organismsDiffer>
    <experiments>2</experiments>
</comment>
<comment type="interaction">
    <interactant intactId="EBI-307461">
        <id>Q9Y297</id>
    </interactant>
    <interactant intactId="EBI-2341518">
        <id>Q9NQ86</id>
        <label>TRIM36</label>
    </interactant>
    <organismsDiffer>false</organismsDiffer>
    <experiments>3</experiments>
</comment>
<comment type="interaction">
    <interactant intactId="EBI-307461">
        <id>Q9Y297</id>
    </interactant>
    <interactant intactId="EBI-720828">
        <id>Q9C026</id>
        <label>TRIM9</label>
    </interactant>
    <organismsDiffer>false</organismsDiffer>
    <experiments>8</experiments>
</comment>
<comment type="interaction">
    <interactant intactId="EBI-307461">
        <id>Q9Y297</id>
    </interactant>
    <interactant intactId="EBI-16437499">
        <id>Q9C026-5</id>
        <label>TRIM9</label>
    </interactant>
    <organismsDiffer>false</organismsDiffer>
    <experiments>4</experiments>
</comment>
<comment type="interaction">
    <interactant intactId="EBI-307461">
        <id>Q9Y297</id>
    </interactant>
    <interactant intactId="EBI-914695">
        <id>P30291</id>
        <label>WEE1</label>
    </interactant>
    <organismsDiffer>false</organismsDiffer>
    <experiments>2</experiments>
</comment>
<comment type="interaction">
    <interactant intactId="EBI-307461">
        <id>Q9Y297</id>
    </interactant>
    <interactant intactId="EBI-720609">
        <id>O76024</id>
        <label>WFS1</label>
    </interactant>
    <organismsDiffer>false</organismsDiffer>
    <experiments>3</experiments>
</comment>
<comment type="interaction">
    <interactant intactId="EBI-307461">
        <id>Q9Y297</id>
    </interactant>
    <interactant intactId="EBI-747743">
        <id>Q9GZV5</id>
        <label>WWTR1</label>
    </interactant>
    <organismsDiffer>false</organismsDiffer>
    <experiments>2</experiments>
</comment>
<comment type="interaction">
    <interactant intactId="EBI-307461">
        <id>Q9Y297</id>
    </interactant>
    <interactant intactId="EBI-1044059">
        <id>P46937</id>
        <label>YAP1</label>
    </interactant>
    <organismsDiffer>false</organismsDiffer>
    <experiments>3</experiments>
</comment>
<comment type="interaction">
    <interactant intactId="EBI-307461">
        <id>Q9Y297</id>
    </interactant>
    <interactant intactId="EBI-747793">
        <id>Q5D1E8</id>
        <label>ZC3H12A</label>
    </interactant>
    <organismsDiffer>false</organismsDiffer>
    <experiments>3</experiments>
</comment>
<comment type="interaction">
    <interactant intactId="EBI-307461">
        <id>Q9Y297</id>
    </interactant>
    <interactant intactId="EBI-389325">
        <id>Q62696</id>
        <label>Dlg1</label>
    </interactant>
    <organismsDiffer>true</organismsDiffer>
    <experiments>3</experiments>
</comment>
<comment type="interaction">
    <interactant intactId="EBI-307461">
        <id>Q9Y297</id>
    </interactant>
    <interactant intactId="EBI-3043905">
        <id>Q60793</id>
        <label>Klf4</label>
    </interactant>
    <organismsDiffer>true</organismsDiffer>
    <experiments>3</experiments>
</comment>
<comment type="interaction">
    <interactant intactId="EBI-8826333">
        <id>Q9Y297-2</id>
    </interactant>
    <interactant intactId="EBI-492498">
        <id>P18848</id>
        <label>ATF4</label>
    </interactant>
    <organismsDiffer>false</organismsDiffer>
    <experiments>5</experiments>
</comment>
<comment type="subcellular location">
    <subcellularLocation>
        <location evidence="1">Cytoplasm</location>
    </subcellularLocation>
    <subcellularLocation>
        <location evidence="1">Nucleus</location>
    </subcellularLocation>
</comment>
<comment type="alternative products">
    <event type="alternative splicing"/>
    <isoform>
        <id>Q9Y297-1</id>
        <name>1</name>
        <sequence type="displayed"/>
    </isoform>
    <isoform>
        <id>Q9Y297-2</id>
        <name>2</name>
        <sequence type="described" ref="VSP_006764"/>
    </isoform>
</comment>
<comment type="tissue specificity">
    <text evidence="31">Expressed in epididymis (at protein level).</text>
</comment>
<comment type="domain">
    <text evidence="27">The N-terminal D domain mediates homodimerization.</text>
</comment>
<comment type="PTM">
    <text evidence="41">Ubiquitinated (PubMed:33110214). Deubiquitinated by OTUD5, promoting its stability (PubMed:33110214).</text>
</comment>
<comment type="online information" name="Atlas of Genetics and Cytogenetics in Oncology and Haematology">
    <link uri="https://atlasgeneticsoncology.org/gene/451/BTRC"/>
</comment>
<name>FBW1A_HUMAN</name>
<keyword id="KW-0002">3D-structure</keyword>
<keyword id="KW-0025">Alternative splicing</keyword>
<keyword id="KW-0090">Biological rhythms</keyword>
<keyword id="KW-0963">Cytoplasm</keyword>
<keyword id="KW-0945">Host-virus interaction</keyword>
<keyword id="KW-0436">Ligase</keyword>
<keyword id="KW-0539">Nucleus</keyword>
<keyword id="KW-1267">Proteomics identification</keyword>
<keyword id="KW-1185">Reference proteome</keyword>
<keyword id="KW-0677">Repeat</keyword>
<keyword id="KW-0832">Ubl conjugation</keyword>
<keyword id="KW-0833">Ubl conjugation pathway</keyword>
<keyword id="KW-0853">WD repeat</keyword>
<keyword id="KW-0879">Wnt signaling pathway</keyword>
<gene>
    <name type="primary">BTRC</name>
    <name type="synonym">BTRCP</name>
    <name type="synonym">FBW1A</name>
    <name type="synonym">FBXW1A</name>
</gene>
<organism>
    <name type="scientific">Homo sapiens</name>
    <name type="common">Human</name>
    <dbReference type="NCBI Taxonomy" id="9606"/>
    <lineage>
        <taxon>Eukaryota</taxon>
        <taxon>Metazoa</taxon>
        <taxon>Chordata</taxon>
        <taxon>Craniata</taxon>
        <taxon>Vertebrata</taxon>
        <taxon>Euteleostomi</taxon>
        <taxon>Mammalia</taxon>
        <taxon>Eutheria</taxon>
        <taxon>Euarchontoglires</taxon>
        <taxon>Primates</taxon>
        <taxon>Haplorrhini</taxon>
        <taxon>Catarrhini</taxon>
        <taxon>Hominidae</taxon>
        <taxon>Homo</taxon>
    </lineage>
</organism>
<protein>
    <recommendedName>
        <fullName>F-box/WD repeat-containing protein 1A</fullName>
    </recommendedName>
    <alternativeName>
        <fullName>E3RSIkappaB</fullName>
    </alternativeName>
    <alternativeName>
        <fullName>Epididymis tissue protein Li 2a</fullName>
    </alternativeName>
    <alternativeName>
        <fullName>F-box and WD repeats protein beta-TrCP</fullName>
    </alternativeName>
    <alternativeName>
        <fullName evidence="49">pIkappaBalpha-E3 receptor subunit</fullName>
    </alternativeName>
</protein>
<feature type="chain" id="PRO_0000050980" description="F-box/WD repeat-containing protein 1A">
    <location>
        <begin position="1"/>
        <end position="605"/>
    </location>
</feature>
<feature type="domain" description="F-box" evidence="2">
    <location>
        <begin position="190"/>
        <end position="228"/>
    </location>
</feature>
<feature type="repeat" description="WD 1">
    <location>
        <begin position="301"/>
        <end position="338"/>
    </location>
</feature>
<feature type="repeat" description="WD 2">
    <location>
        <begin position="341"/>
        <end position="378"/>
    </location>
</feature>
<feature type="repeat" description="WD 3">
    <location>
        <begin position="381"/>
        <end position="418"/>
    </location>
</feature>
<feature type="repeat" description="WD 4">
    <location>
        <begin position="424"/>
        <end position="461"/>
    </location>
</feature>
<feature type="repeat" description="WD 5">
    <location>
        <begin position="464"/>
        <end position="503"/>
    </location>
</feature>
<feature type="repeat" description="WD 6">
    <location>
        <begin position="505"/>
        <end position="541"/>
    </location>
</feature>
<feature type="repeat" description="WD 7">
    <location>
        <begin position="553"/>
        <end position="590"/>
    </location>
</feature>
<feature type="region of interest" description="Homodimerization domain D">
    <location>
        <begin position="128"/>
        <end position="177"/>
    </location>
</feature>
<feature type="region of interest" description="Required for down-regulation of SNAI1">
    <location>
        <begin position="190"/>
        <end position="228"/>
    </location>
</feature>
<feature type="splice variant" id="VSP_006764" description="In isoform 2." evidence="47 48">
    <location>
        <begin position="17"/>
        <end position="52"/>
    </location>
</feature>
<feature type="sequence variant" id="VAR_022027" description="In dbSNP:rs4151060.">
    <original>A</original>
    <variation>S</variation>
    <location>
        <position position="543"/>
    </location>
</feature>
<feature type="sequence variant" id="VAR_020119" description="In dbSNP:rs2270439.">
    <original>P</original>
    <variation>H</variation>
    <location>
        <position position="592"/>
    </location>
</feature>
<feature type="mutagenesis site" description="Abolished binding to TFE3 and MITF substrates." evidence="42">
    <original>Y</original>
    <variation>A</variation>
    <location>
        <position position="307"/>
    </location>
</feature>
<feature type="mutagenesis site" description="Abolished binding to TFE3 and MITF substrates." evidence="42">
    <original>R</original>
    <variation>A</variation>
    <location>
        <position position="321"/>
    </location>
</feature>
<feature type="mutagenesis site" description="Abolished binding to DEPTOR, TFE3 and MITF substrates." evidence="33 42">
    <original>R</original>
    <variation>A</variation>
    <location>
        <position position="510"/>
    </location>
</feature>
<feature type="helix" evidence="50">
    <location>
        <begin position="129"/>
        <end position="141"/>
    </location>
</feature>
<feature type="helix" evidence="50">
    <location>
        <begin position="146"/>
        <end position="158"/>
    </location>
</feature>
<feature type="helix" evidence="50">
    <location>
        <begin position="162"/>
        <end position="172"/>
    </location>
</feature>
<feature type="helix" evidence="50">
    <location>
        <begin position="173"/>
        <end position="175"/>
    </location>
</feature>
<feature type="helix" evidence="51">
    <location>
        <begin position="180"/>
        <end position="186"/>
    </location>
</feature>
<feature type="helix" evidence="51">
    <location>
        <begin position="190"/>
        <end position="198"/>
    </location>
</feature>
<feature type="helix" evidence="51">
    <location>
        <begin position="202"/>
        <end position="209"/>
    </location>
</feature>
<feature type="helix" evidence="51">
    <location>
        <begin position="213"/>
        <end position="221"/>
    </location>
</feature>
<feature type="helix" evidence="51">
    <location>
        <begin position="224"/>
        <end position="235"/>
    </location>
</feature>
<feature type="helix" evidence="51">
    <location>
        <begin position="237"/>
        <end position="246"/>
    </location>
</feature>
<feature type="helix" evidence="51">
    <location>
        <begin position="248"/>
        <end position="251"/>
    </location>
</feature>
<feature type="helix" evidence="51">
    <location>
        <begin position="265"/>
        <end position="288"/>
    </location>
</feature>
<feature type="strand" evidence="51">
    <location>
        <begin position="292"/>
        <end position="297"/>
    </location>
</feature>
<feature type="strand" evidence="51">
    <location>
        <begin position="301"/>
        <end position="303"/>
    </location>
</feature>
<feature type="strand" evidence="51">
    <location>
        <begin position="306"/>
        <end position="311"/>
    </location>
</feature>
<feature type="strand" evidence="51">
    <location>
        <begin position="313"/>
        <end position="320"/>
    </location>
</feature>
<feature type="strand" evidence="51">
    <location>
        <begin position="325"/>
        <end position="329"/>
    </location>
</feature>
<feature type="turn" evidence="51">
    <location>
        <begin position="330"/>
        <end position="332"/>
    </location>
</feature>
<feature type="strand" evidence="51">
    <location>
        <begin position="335"/>
        <end position="339"/>
    </location>
</feature>
<feature type="strand" evidence="51">
    <location>
        <begin position="346"/>
        <end position="351"/>
    </location>
</feature>
<feature type="strand" evidence="51">
    <location>
        <begin position="353"/>
        <end position="360"/>
    </location>
</feature>
<feature type="strand" evidence="51">
    <location>
        <begin position="363"/>
        <end position="369"/>
    </location>
</feature>
<feature type="turn" evidence="51">
    <location>
        <begin position="370"/>
        <end position="372"/>
    </location>
</feature>
<feature type="strand" evidence="51">
    <location>
        <begin position="375"/>
        <end position="380"/>
    </location>
</feature>
<feature type="strand" evidence="51">
    <location>
        <begin position="386"/>
        <end position="392"/>
    </location>
</feature>
<feature type="strand" evidence="51">
    <location>
        <begin position="395"/>
        <end position="400"/>
    </location>
</feature>
<feature type="strand" evidence="51">
    <location>
        <begin position="405"/>
        <end position="412"/>
    </location>
</feature>
<feature type="strand" evidence="51">
    <location>
        <begin position="415"/>
        <end position="422"/>
    </location>
</feature>
<feature type="strand" evidence="51">
    <location>
        <begin position="429"/>
        <end position="434"/>
    </location>
</feature>
<feature type="strand" evidence="51">
    <location>
        <begin position="436"/>
        <end position="443"/>
    </location>
</feature>
<feature type="strand" evidence="51">
    <location>
        <begin position="448"/>
        <end position="452"/>
    </location>
</feature>
<feature type="turn" evidence="51">
    <location>
        <begin position="453"/>
        <end position="455"/>
    </location>
</feature>
<feature type="strand" evidence="51">
    <location>
        <begin position="458"/>
        <end position="462"/>
    </location>
</feature>
<feature type="strand" evidence="51">
    <location>
        <begin position="469"/>
        <end position="475"/>
    </location>
</feature>
<feature type="strand" evidence="51">
    <location>
        <begin position="478"/>
        <end position="483"/>
    </location>
</feature>
<feature type="strand" evidence="51">
    <location>
        <begin position="488"/>
        <end position="492"/>
    </location>
</feature>
<feature type="turn" evidence="51">
    <location>
        <begin position="493"/>
        <end position="495"/>
    </location>
</feature>
<feature type="strand" evidence="51">
    <location>
        <begin position="498"/>
        <end position="502"/>
    </location>
</feature>
<feature type="strand" evidence="51">
    <location>
        <begin position="509"/>
        <end position="514"/>
    </location>
</feature>
<feature type="strand" evidence="51">
    <location>
        <begin position="516"/>
        <end position="523"/>
    </location>
</feature>
<feature type="strand" evidence="51">
    <location>
        <begin position="526"/>
        <end position="532"/>
    </location>
</feature>
<feature type="helix" evidence="51">
    <location>
        <begin position="533"/>
        <end position="536"/>
    </location>
</feature>
<feature type="helix" evidence="51">
    <location>
        <begin position="543"/>
        <end position="545"/>
    </location>
</feature>
<feature type="strand" evidence="51">
    <location>
        <begin position="546"/>
        <end position="552"/>
    </location>
</feature>
<feature type="strand" evidence="51">
    <location>
        <begin position="558"/>
        <end position="563"/>
    </location>
</feature>
<feature type="strand" evidence="51">
    <location>
        <begin position="565"/>
        <end position="572"/>
    </location>
</feature>
<feature type="strand" evidence="51">
    <location>
        <begin position="575"/>
        <end position="581"/>
    </location>
</feature>
<sequence length="605" mass="68867">MDPAEAVLQEKALKFMCSMPRSLWLGCSSLADSMPSLRCLYNPGTGALTAFQNSSEREDCNNGEPPRKIIPEKNSLRQTYNSCARLCLNQETVCLASTAMKTENCVAKTKLANGTSSMIVPKQRKLSASYEKEKELCVKYFEQWSESDQVEFVEHLISQMCHYQHGHINSYLKPMLQRDFITALPARGLDHIAENILSYLDAKSLCAAELVCKEWYRVTSDGMLWKKLIERMVRTDSLWRGLAERRGWGQYLFKNKPPDGNAPPNSFYRALYPKIIQDIETIESNWRCGRHSLQRIHCRSETSKGVYCLQYDDQKIVSGLRDNTIKIWDKNTLECKRILTGHTGSVLCLQYDERVIITGSSDSTVRVWDVNTGEMLNTLIHHCEAVLHLRFNNGMMVTCSKDRSIAVWDMASPTDITLRRVLVGHRAAVNVVDFDDKYIVSASGDRTIKVWNTSTCEFVRTLNGHKRGIACLQYRDRLVVSGSSDNTIRLWDIECGACLRVLEGHEELVRCIRFDNKRIVSGAYDGKIKVWDLVAALDPRAPAGTLCLRTLVEHSGRVFRLQFDEFQIVSSSHDDTILIWDFLNDPAAQAEPPRSPSRTYTYISR</sequence>
<dbReference type="EMBL" id="AF101784">
    <property type="protein sequence ID" value="AAD08702.1"/>
    <property type="molecule type" value="mRNA"/>
</dbReference>
<dbReference type="EMBL" id="Y14153">
    <property type="protein sequence ID" value="CAA74572.1"/>
    <property type="molecule type" value="mRNA"/>
</dbReference>
<dbReference type="EMBL" id="AF129530">
    <property type="protein sequence ID" value="AAF04464.1"/>
    <property type="molecule type" value="mRNA"/>
</dbReference>
<dbReference type="EMBL" id="GU727631">
    <property type="protein sequence ID" value="ADU87633.1"/>
    <property type="molecule type" value="mRNA"/>
</dbReference>
<dbReference type="EMBL" id="AK313353">
    <property type="protein sequence ID" value="BAG36155.1"/>
    <property type="molecule type" value="mRNA"/>
</dbReference>
<dbReference type="EMBL" id="AL133387">
    <property type="status" value="NOT_ANNOTATED_CDS"/>
    <property type="molecule type" value="Genomic_DNA"/>
</dbReference>
<dbReference type="EMBL" id="AL445463">
    <property type="status" value="NOT_ANNOTATED_CDS"/>
    <property type="molecule type" value="Genomic_DNA"/>
</dbReference>
<dbReference type="EMBL" id="AL627424">
    <property type="status" value="NOT_ANNOTATED_CDS"/>
    <property type="molecule type" value="Genomic_DNA"/>
</dbReference>
<dbReference type="EMBL" id="CH471066">
    <property type="protein sequence ID" value="EAW49772.1"/>
    <property type="molecule type" value="Genomic_DNA"/>
</dbReference>
<dbReference type="EMBL" id="CH471066">
    <property type="protein sequence ID" value="EAW49774.1"/>
    <property type="molecule type" value="Genomic_DNA"/>
</dbReference>
<dbReference type="EMBL" id="BC027994">
    <property type="protein sequence ID" value="AAH27994.1"/>
    <property type="molecule type" value="mRNA"/>
</dbReference>
<dbReference type="CCDS" id="CCDS7511.1">
    <molecule id="Q9Y297-2"/>
</dbReference>
<dbReference type="CCDS" id="CCDS7512.1">
    <molecule id="Q9Y297-1"/>
</dbReference>
<dbReference type="RefSeq" id="NP_003930.1">
    <molecule id="Q9Y297-2"/>
    <property type="nucleotide sequence ID" value="NM_003939.5"/>
</dbReference>
<dbReference type="RefSeq" id="NP_378663.1">
    <molecule id="Q9Y297-1"/>
    <property type="nucleotide sequence ID" value="NM_033637.4"/>
</dbReference>
<dbReference type="PDB" id="1P22">
    <property type="method" value="X-ray"/>
    <property type="resolution" value="2.95 A"/>
    <property type="chains" value="A=175-605"/>
</dbReference>
<dbReference type="PDB" id="2P64">
    <property type="method" value="X-ray"/>
    <property type="resolution" value="2.50 A"/>
    <property type="chains" value="A/B=128-177"/>
</dbReference>
<dbReference type="PDB" id="6M90">
    <property type="method" value="X-ray"/>
    <property type="resolution" value="2.05 A"/>
    <property type="chains" value="A=175-605"/>
</dbReference>
<dbReference type="PDB" id="6M91">
    <property type="method" value="X-ray"/>
    <property type="resolution" value="2.40 A"/>
    <property type="chains" value="A=175-605"/>
</dbReference>
<dbReference type="PDB" id="6M92">
    <property type="method" value="X-ray"/>
    <property type="resolution" value="2.35 A"/>
    <property type="chains" value="A=175-605"/>
</dbReference>
<dbReference type="PDB" id="6M93">
    <property type="method" value="X-ray"/>
    <property type="resolution" value="2.50 A"/>
    <property type="chains" value="A=175-605"/>
</dbReference>
<dbReference type="PDB" id="6M94">
    <property type="method" value="X-ray"/>
    <property type="resolution" value="2.70 A"/>
    <property type="chains" value="A=175-605"/>
</dbReference>
<dbReference type="PDB" id="6TTU">
    <property type="method" value="EM"/>
    <property type="resolution" value="3.70 A"/>
    <property type="chains" value="T=1-605"/>
</dbReference>
<dbReference type="PDBsum" id="1P22"/>
<dbReference type="PDBsum" id="2P64"/>
<dbReference type="PDBsum" id="6M90"/>
<dbReference type="PDBsum" id="6M91"/>
<dbReference type="PDBsum" id="6M92"/>
<dbReference type="PDBsum" id="6M93"/>
<dbReference type="PDBsum" id="6M94"/>
<dbReference type="PDBsum" id="6TTU"/>
<dbReference type="EMDB" id="EMD-10585"/>
<dbReference type="SMR" id="Q9Y297"/>
<dbReference type="BioGRID" id="114457">
    <property type="interactions" value="764"/>
</dbReference>
<dbReference type="ComplexPortal" id="CPX-2365">
    <property type="entry name" value="SCF E3 ubiquitin ligase complex, BTRC variant"/>
</dbReference>
<dbReference type="CORUM" id="Q9Y297"/>
<dbReference type="DIP" id="DIP-31607N"/>
<dbReference type="FunCoup" id="Q9Y297">
    <property type="interactions" value="2099"/>
</dbReference>
<dbReference type="IntAct" id="Q9Y297">
    <property type="interactions" value="189"/>
</dbReference>
<dbReference type="MINT" id="Q9Y297"/>
<dbReference type="STRING" id="9606.ENSP00000359206"/>
<dbReference type="GlyGen" id="Q9Y297">
    <property type="glycosylation" value="1 site, 1 O-linked glycan (1 site)"/>
</dbReference>
<dbReference type="iPTMnet" id="Q9Y297"/>
<dbReference type="PhosphoSitePlus" id="Q9Y297"/>
<dbReference type="BioMuta" id="BTRC"/>
<dbReference type="DMDM" id="13124271"/>
<dbReference type="jPOST" id="Q9Y297"/>
<dbReference type="MassIVE" id="Q9Y297"/>
<dbReference type="PaxDb" id="9606-ENSP00000359206"/>
<dbReference type="PeptideAtlas" id="Q9Y297"/>
<dbReference type="ProteomicsDB" id="85705">
    <molecule id="Q9Y297-1"/>
</dbReference>
<dbReference type="ProteomicsDB" id="85706">
    <molecule id="Q9Y297-2"/>
</dbReference>
<dbReference type="Pumba" id="Q9Y297"/>
<dbReference type="Antibodypedia" id="31277">
    <property type="antibodies" value="390 antibodies from 32 providers"/>
</dbReference>
<dbReference type="DNASU" id="8945"/>
<dbReference type="Ensembl" id="ENST00000370187.8">
    <molecule id="Q9Y297-1"/>
    <property type="protein sequence ID" value="ENSP00000359206.3"/>
    <property type="gene ID" value="ENSG00000166167.18"/>
</dbReference>
<dbReference type="Ensembl" id="ENST00000408038.6">
    <molecule id="Q9Y297-2"/>
    <property type="protein sequence ID" value="ENSP00000385339.2"/>
    <property type="gene ID" value="ENSG00000166167.18"/>
</dbReference>
<dbReference type="GeneID" id="8945"/>
<dbReference type="KEGG" id="hsa:8945"/>
<dbReference type="MANE-Select" id="ENST00000370187.8">
    <property type="protein sequence ID" value="ENSP00000359206.3"/>
    <property type="RefSeq nucleotide sequence ID" value="NM_033637.4"/>
    <property type="RefSeq protein sequence ID" value="NP_378663.1"/>
</dbReference>
<dbReference type="UCSC" id="uc001kta.5">
    <molecule id="Q9Y297-1"/>
    <property type="organism name" value="human"/>
</dbReference>
<dbReference type="AGR" id="HGNC:1144"/>
<dbReference type="CTD" id="8945"/>
<dbReference type="DisGeNET" id="8945"/>
<dbReference type="GeneCards" id="BTRC"/>
<dbReference type="HGNC" id="HGNC:1144">
    <property type="gene designation" value="BTRC"/>
</dbReference>
<dbReference type="HPA" id="ENSG00000166167">
    <property type="expression patterns" value="Low tissue specificity"/>
</dbReference>
<dbReference type="MalaCards" id="BTRC"/>
<dbReference type="MIM" id="603482">
    <property type="type" value="gene"/>
</dbReference>
<dbReference type="neXtProt" id="NX_Q9Y297"/>
<dbReference type="OpenTargets" id="ENSG00000166167"/>
<dbReference type="Orphanet" id="2440">
    <property type="disease" value="Isolated split hand-split foot malformation"/>
</dbReference>
<dbReference type="PharmGKB" id="PA25465"/>
<dbReference type="VEuPathDB" id="HostDB:ENSG00000166167"/>
<dbReference type="eggNOG" id="KOG0281">
    <property type="taxonomic scope" value="Eukaryota"/>
</dbReference>
<dbReference type="GeneTree" id="ENSGT00940000159672"/>
<dbReference type="HOGENOM" id="CLU_000288_103_6_1"/>
<dbReference type="InParanoid" id="Q9Y297"/>
<dbReference type="OMA" id="GIAHVWS"/>
<dbReference type="OrthoDB" id="19711at2759"/>
<dbReference type="PAN-GO" id="Q9Y297">
    <property type="GO annotations" value="2 GO annotations based on evolutionary models"/>
</dbReference>
<dbReference type="PhylomeDB" id="Q9Y297"/>
<dbReference type="TreeFam" id="TF105679"/>
<dbReference type="PathwayCommons" id="Q9Y297"/>
<dbReference type="Reactome" id="R-HSA-1169091">
    <property type="pathway name" value="Activation of NF-kappaB in B cells"/>
</dbReference>
<dbReference type="Reactome" id="R-HSA-1170546">
    <property type="pathway name" value="Prolactin receptor signaling"/>
</dbReference>
<dbReference type="Reactome" id="R-HSA-174113">
    <property type="pathway name" value="SCF-beta-TrCP mediated degradation of Emi1"/>
</dbReference>
<dbReference type="Reactome" id="R-HSA-180534">
    <property type="pathway name" value="Vpu mediated degradation of CD4"/>
</dbReference>
<dbReference type="Reactome" id="R-HSA-195253">
    <property type="pathway name" value="Degradation of beta-catenin by the destruction complex"/>
</dbReference>
<dbReference type="Reactome" id="R-HSA-202424">
    <property type="pathway name" value="Downstream TCR signaling"/>
</dbReference>
<dbReference type="Reactome" id="R-HSA-2565942">
    <property type="pathway name" value="Regulation of PLK1 Activity at G2/M Transition"/>
</dbReference>
<dbReference type="Reactome" id="R-HSA-2871837">
    <property type="pathway name" value="FCERI mediated NF-kB activation"/>
</dbReference>
<dbReference type="Reactome" id="R-HSA-3769402">
    <property type="pathway name" value="Deactivation of the beta-catenin transactivating complex"/>
</dbReference>
<dbReference type="Reactome" id="R-HSA-400253">
    <property type="pathway name" value="Circadian Clock"/>
</dbReference>
<dbReference type="Reactome" id="R-HSA-5607761">
    <property type="pathway name" value="Dectin-1 mediated noncanonical NF-kB signaling"/>
</dbReference>
<dbReference type="Reactome" id="R-HSA-5607764">
    <property type="pathway name" value="CLEC7A (Dectin-1) signaling"/>
</dbReference>
<dbReference type="Reactome" id="R-HSA-5610780">
    <property type="pathway name" value="Degradation of GLI1 by the proteasome"/>
</dbReference>
<dbReference type="Reactome" id="R-HSA-5610783">
    <property type="pathway name" value="Degradation of GLI2 by the proteasome"/>
</dbReference>
<dbReference type="Reactome" id="R-HSA-5610785">
    <property type="pathway name" value="GLI3 is processed to GLI3R by the proteasome"/>
</dbReference>
<dbReference type="Reactome" id="R-HSA-5676590">
    <property type="pathway name" value="NIK--&gt;noncanonical NF-kB signaling"/>
</dbReference>
<dbReference type="Reactome" id="R-HSA-5684264">
    <property type="pathway name" value="MAP3K8 (TPL2)-dependent MAPK1/3 activation"/>
</dbReference>
<dbReference type="Reactome" id="R-HSA-8951664">
    <property type="pathway name" value="Neddylation"/>
</dbReference>
<dbReference type="Reactome" id="R-HSA-9020702">
    <property type="pathway name" value="Interleukin-1 signaling"/>
</dbReference>
<dbReference type="Reactome" id="R-HSA-9762114">
    <property type="pathway name" value="GSK3B and BTRC:CUL1-mediated-degradation of NFE2L2"/>
</dbReference>
<dbReference type="Reactome" id="R-HSA-983168">
    <property type="pathway name" value="Antigen processing: Ubiquitination &amp; Proteasome degradation"/>
</dbReference>
<dbReference type="SignaLink" id="Q9Y297"/>
<dbReference type="SIGNOR" id="Q9Y297"/>
<dbReference type="UniPathway" id="UPA00143"/>
<dbReference type="BioGRID-ORCS" id="8945">
    <property type="hits" value="20 hits in 1208 CRISPR screens"/>
</dbReference>
<dbReference type="ChiTaRS" id="BTRC">
    <property type="organism name" value="human"/>
</dbReference>
<dbReference type="EvolutionaryTrace" id="Q9Y297"/>
<dbReference type="GeneWiki" id="BTRC_(gene)"/>
<dbReference type="GenomeRNAi" id="8945"/>
<dbReference type="Pharos" id="Q9Y297">
    <property type="development level" value="Tbio"/>
</dbReference>
<dbReference type="PRO" id="PR:Q9Y297"/>
<dbReference type="Proteomes" id="UP000005640">
    <property type="component" value="Chromosome 10"/>
</dbReference>
<dbReference type="RNAct" id="Q9Y297">
    <property type="molecule type" value="protein"/>
</dbReference>
<dbReference type="Bgee" id="ENSG00000166167">
    <property type="expression patterns" value="Expressed in secondary oocyte and 179 other cell types or tissues"/>
</dbReference>
<dbReference type="ExpressionAtlas" id="Q9Y297">
    <property type="expression patterns" value="baseline and differential"/>
</dbReference>
<dbReference type="GO" id="GO:0005737">
    <property type="term" value="C:cytoplasm"/>
    <property type="evidence" value="ECO:0000305"/>
    <property type="project" value="UniProt"/>
</dbReference>
<dbReference type="GO" id="GO:0005829">
    <property type="term" value="C:cytosol"/>
    <property type="evidence" value="ECO:0000304"/>
    <property type="project" value="Reactome"/>
</dbReference>
<dbReference type="GO" id="GO:0005654">
    <property type="term" value="C:nucleoplasm"/>
    <property type="evidence" value="ECO:0000304"/>
    <property type="project" value="Reactome"/>
</dbReference>
<dbReference type="GO" id="GO:0019005">
    <property type="term" value="C:SCF ubiquitin ligase complex"/>
    <property type="evidence" value="ECO:0000314"/>
    <property type="project" value="UniProtKB"/>
</dbReference>
<dbReference type="GO" id="GO:0008013">
    <property type="term" value="F:beta-catenin binding"/>
    <property type="evidence" value="ECO:0000314"/>
    <property type="project" value="ParkinsonsUK-UCL"/>
</dbReference>
<dbReference type="GO" id="GO:0016874">
    <property type="term" value="F:ligase activity"/>
    <property type="evidence" value="ECO:0007669"/>
    <property type="project" value="UniProtKB-KW"/>
</dbReference>
<dbReference type="GO" id="GO:0046983">
    <property type="term" value="F:protein dimerization activity"/>
    <property type="evidence" value="ECO:0007669"/>
    <property type="project" value="InterPro"/>
</dbReference>
<dbReference type="GO" id="GO:0045309">
    <property type="term" value="F:protein phosphorylated amino acid binding"/>
    <property type="evidence" value="ECO:0007669"/>
    <property type="project" value="Ensembl"/>
</dbReference>
<dbReference type="GO" id="GO:1990757">
    <property type="term" value="F:ubiquitin ligase activator activity"/>
    <property type="evidence" value="ECO:0000314"/>
    <property type="project" value="ParkinsonsUK-UCL"/>
</dbReference>
<dbReference type="GO" id="GO:0061630">
    <property type="term" value="F:ubiquitin protein ligase activity"/>
    <property type="evidence" value="ECO:0007669"/>
    <property type="project" value="Ensembl"/>
</dbReference>
<dbReference type="GO" id="GO:1990756">
    <property type="term" value="F:ubiquitin-like ligase-substrate adaptor activity"/>
    <property type="evidence" value="ECO:0000314"/>
    <property type="project" value="UniProtKB"/>
</dbReference>
<dbReference type="GO" id="GO:0060444">
    <property type="term" value="P:branching involved in mammary gland duct morphogenesis"/>
    <property type="evidence" value="ECO:0007669"/>
    <property type="project" value="Ensembl"/>
</dbReference>
<dbReference type="GO" id="GO:0033598">
    <property type="term" value="P:mammary gland epithelial cell proliferation"/>
    <property type="evidence" value="ECO:0007669"/>
    <property type="project" value="Ensembl"/>
</dbReference>
<dbReference type="GO" id="GO:0045879">
    <property type="term" value="P:negative regulation of smoothened signaling pathway"/>
    <property type="evidence" value="ECO:0000304"/>
    <property type="project" value="BHF-UCL"/>
</dbReference>
<dbReference type="GO" id="GO:0050860">
    <property type="term" value="P:negative regulation of T cell receptor signaling pathway"/>
    <property type="evidence" value="ECO:0000314"/>
    <property type="project" value="UniProt"/>
</dbReference>
<dbReference type="GO" id="GO:0000122">
    <property type="term" value="P:negative regulation of transcription by RNA polymerase II"/>
    <property type="evidence" value="ECO:0000304"/>
    <property type="project" value="BHF-UCL"/>
</dbReference>
<dbReference type="GO" id="GO:0038061">
    <property type="term" value="P:non-canonical NF-kappaB signal transduction"/>
    <property type="evidence" value="ECO:0000314"/>
    <property type="project" value="UniProt"/>
</dbReference>
<dbReference type="GO" id="GO:0042753">
    <property type="term" value="P:positive regulation of circadian rhythm"/>
    <property type="evidence" value="ECO:0000250"/>
    <property type="project" value="UniProtKB"/>
</dbReference>
<dbReference type="GO" id="GO:0045893">
    <property type="term" value="P:positive regulation of DNA-templated transcription"/>
    <property type="evidence" value="ECO:0000250"/>
    <property type="project" value="UniProtKB"/>
</dbReference>
<dbReference type="GO" id="GO:0045862">
    <property type="term" value="P:positive regulation of proteolysis"/>
    <property type="evidence" value="ECO:0000315"/>
    <property type="project" value="UniProtKB"/>
</dbReference>
<dbReference type="GO" id="GO:1904668">
    <property type="term" value="P:positive regulation of ubiquitin protein ligase activity"/>
    <property type="evidence" value="ECO:0000314"/>
    <property type="project" value="ParkinsonsUK-UCL"/>
</dbReference>
<dbReference type="GO" id="GO:0043161">
    <property type="term" value="P:proteasome-mediated ubiquitin-dependent protein catabolic process"/>
    <property type="evidence" value="ECO:0000314"/>
    <property type="project" value="UniProtKB"/>
</dbReference>
<dbReference type="GO" id="GO:0006470">
    <property type="term" value="P:protein dephosphorylation"/>
    <property type="evidence" value="ECO:0000250"/>
    <property type="project" value="UniProtKB"/>
</dbReference>
<dbReference type="GO" id="GO:0031648">
    <property type="term" value="P:protein destabilization"/>
    <property type="evidence" value="ECO:0000315"/>
    <property type="project" value="UniProtKB"/>
</dbReference>
<dbReference type="GO" id="GO:0070936">
    <property type="term" value="P:protein K48-linked ubiquitination"/>
    <property type="evidence" value="ECO:0000314"/>
    <property type="project" value="UniProt"/>
</dbReference>
<dbReference type="GO" id="GO:0000209">
    <property type="term" value="P:protein polyubiquitination"/>
    <property type="evidence" value="ECO:0000314"/>
    <property type="project" value="ParkinsonsUK-UCL"/>
</dbReference>
<dbReference type="GO" id="GO:0016567">
    <property type="term" value="P:protein ubiquitination"/>
    <property type="evidence" value="ECO:0000314"/>
    <property type="project" value="UniProtKB"/>
</dbReference>
<dbReference type="GO" id="GO:0043122">
    <property type="term" value="P:regulation of canonical NF-kappaB signal transduction"/>
    <property type="evidence" value="ECO:0007669"/>
    <property type="project" value="Ensembl"/>
</dbReference>
<dbReference type="GO" id="GO:0060828">
    <property type="term" value="P:regulation of canonical Wnt signaling pathway"/>
    <property type="evidence" value="ECO:0000305"/>
    <property type="project" value="ParkinsonsUK-UCL"/>
</dbReference>
<dbReference type="GO" id="GO:0051726">
    <property type="term" value="P:regulation of cell cycle"/>
    <property type="evidence" value="ECO:0007669"/>
    <property type="project" value="Ensembl"/>
</dbReference>
<dbReference type="GO" id="GO:0042752">
    <property type="term" value="P:regulation of circadian rhythm"/>
    <property type="evidence" value="ECO:0000314"/>
    <property type="project" value="UniProtKB"/>
</dbReference>
<dbReference type="GO" id="GO:0061136">
    <property type="term" value="P:regulation of proteasomal protein catabolic process"/>
    <property type="evidence" value="ECO:0007669"/>
    <property type="project" value="Ensembl"/>
</dbReference>
<dbReference type="GO" id="GO:0048511">
    <property type="term" value="P:rhythmic process"/>
    <property type="evidence" value="ECO:0007669"/>
    <property type="project" value="UniProtKB-KW"/>
</dbReference>
<dbReference type="GO" id="GO:0031146">
    <property type="term" value="P:SCF-dependent proteasomal ubiquitin-dependent protein catabolic process"/>
    <property type="evidence" value="ECO:0000314"/>
    <property type="project" value="UniProtKB"/>
</dbReference>
<dbReference type="GO" id="GO:0007165">
    <property type="term" value="P:signal transduction"/>
    <property type="evidence" value="ECO:0000304"/>
    <property type="project" value="ProtInc"/>
</dbReference>
<dbReference type="GO" id="GO:0006511">
    <property type="term" value="P:ubiquitin-dependent protein catabolic process"/>
    <property type="evidence" value="ECO:0000314"/>
    <property type="project" value="UniProtKB"/>
</dbReference>
<dbReference type="GO" id="GO:0016055">
    <property type="term" value="P:Wnt signaling pathway"/>
    <property type="evidence" value="ECO:0007669"/>
    <property type="project" value="UniProtKB-KW"/>
</dbReference>
<dbReference type="CDD" id="cd22182">
    <property type="entry name" value="F-box_FBXW1A"/>
    <property type="match status" value="1"/>
</dbReference>
<dbReference type="CDD" id="cd00200">
    <property type="entry name" value="WD40"/>
    <property type="match status" value="1"/>
</dbReference>
<dbReference type="FunFam" id="1.20.1280.50:FF:000001">
    <property type="entry name" value="F-box/WD repeat-containing protein 11 isoform X2"/>
    <property type="match status" value="1"/>
</dbReference>
<dbReference type="FunFam" id="2.130.10.10:FF:000004">
    <property type="entry name" value="F-box/WD repeat-containing protein 11 isoform X2"/>
    <property type="match status" value="1"/>
</dbReference>
<dbReference type="Gene3D" id="1.20.1280.50">
    <property type="match status" value="1"/>
</dbReference>
<dbReference type="Gene3D" id="6.10.250.1840">
    <property type="match status" value="1"/>
</dbReference>
<dbReference type="Gene3D" id="2.130.10.10">
    <property type="entry name" value="YVTN repeat-like/Quinoprotein amine dehydrogenase"/>
    <property type="match status" value="1"/>
</dbReference>
<dbReference type="IDEAL" id="IID00254"/>
<dbReference type="InterPro" id="IPR021977">
    <property type="entry name" value="Beta-TrCP_D"/>
</dbReference>
<dbReference type="InterPro" id="IPR036047">
    <property type="entry name" value="F-box-like_dom_sf"/>
</dbReference>
<dbReference type="InterPro" id="IPR001810">
    <property type="entry name" value="F-box_dom"/>
</dbReference>
<dbReference type="InterPro" id="IPR020472">
    <property type="entry name" value="G-protein_beta_WD-40_rep"/>
</dbReference>
<dbReference type="InterPro" id="IPR050995">
    <property type="entry name" value="WD-F-box_domain-protein"/>
</dbReference>
<dbReference type="InterPro" id="IPR015943">
    <property type="entry name" value="WD40/YVTN_repeat-like_dom_sf"/>
</dbReference>
<dbReference type="InterPro" id="IPR019775">
    <property type="entry name" value="WD40_repeat_CS"/>
</dbReference>
<dbReference type="InterPro" id="IPR036322">
    <property type="entry name" value="WD40_repeat_dom_sf"/>
</dbReference>
<dbReference type="InterPro" id="IPR001680">
    <property type="entry name" value="WD40_rpt"/>
</dbReference>
<dbReference type="PANTHER" id="PTHR14604:SF5">
    <property type="entry name" value="F-BOX_WD REPEAT-CONTAINING PROTEIN 1A"/>
    <property type="match status" value="1"/>
</dbReference>
<dbReference type="PANTHER" id="PTHR14604">
    <property type="entry name" value="WD40 REPEAT PF20"/>
    <property type="match status" value="1"/>
</dbReference>
<dbReference type="Pfam" id="PF12125">
    <property type="entry name" value="Beta-TrCP_D"/>
    <property type="match status" value="1"/>
</dbReference>
<dbReference type="Pfam" id="PF12937">
    <property type="entry name" value="F-box-like"/>
    <property type="match status" value="1"/>
</dbReference>
<dbReference type="Pfam" id="PF00400">
    <property type="entry name" value="WD40"/>
    <property type="match status" value="7"/>
</dbReference>
<dbReference type="PRINTS" id="PR00320">
    <property type="entry name" value="GPROTEINBRPT"/>
</dbReference>
<dbReference type="SMART" id="SM01028">
    <property type="entry name" value="Beta-TrCP_D"/>
    <property type="match status" value="1"/>
</dbReference>
<dbReference type="SMART" id="SM00256">
    <property type="entry name" value="FBOX"/>
    <property type="match status" value="1"/>
</dbReference>
<dbReference type="SMART" id="SM00320">
    <property type="entry name" value="WD40"/>
    <property type="match status" value="7"/>
</dbReference>
<dbReference type="SUPFAM" id="SSF81383">
    <property type="entry name" value="F-box domain"/>
    <property type="match status" value="1"/>
</dbReference>
<dbReference type="SUPFAM" id="SSF50978">
    <property type="entry name" value="WD40 repeat-like"/>
    <property type="match status" value="1"/>
</dbReference>
<dbReference type="PROSITE" id="PS50181">
    <property type="entry name" value="FBOX"/>
    <property type="match status" value="1"/>
</dbReference>
<dbReference type="PROSITE" id="PS00678">
    <property type="entry name" value="WD_REPEATS_1"/>
    <property type="match status" value="6"/>
</dbReference>
<dbReference type="PROSITE" id="PS50082">
    <property type="entry name" value="WD_REPEATS_2"/>
    <property type="match status" value="7"/>
</dbReference>
<dbReference type="PROSITE" id="PS50294">
    <property type="entry name" value="WD_REPEATS_REGION"/>
    <property type="match status" value="1"/>
</dbReference>